<proteinExistence type="evidence at protein level"/>
<gene>
    <name type="primary">LRP6</name>
</gene>
<dbReference type="EMBL" id="AF074264">
    <property type="protein sequence ID" value="AAC33006.1"/>
    <property type="molecule type" value="mRNA"/>
</dbReference>
<dbReference type="EMBL" id="AC007537">
    <property type="status" value="NOT_ANNOTATED_CDS"/>
    <property type="molecule type" value="Genomic_DNA"/>
</dbReference>
<dbReference type="EMBL" id="AC007621">
    <property type="status" value="NOT_ANNOTATED_CDS"/>
    <property type="molecule type" value="Genomic_DNA"/>
</dbReference>
<dbReference type="EMBL" id="BC117136">
    <property type="protein sequence ID" value="AAI17137.1"/>
    <property type="molecule type" value="mRNA"/>
</dbReference>
<dbReference type="EMBL" id="BC126405">
    <property type="protein sequence ID" value="AAI26406.1"/>
    <property type="molecule type" value="mRNA"/>
</dbReference>
<dbReference type="CCDS" id="CCDS8647.1"/>
<dbReference type="PIR" id="JE0272">
    <property type="entry name" value="JE0272"/>
</dbReference>
<dbReference type="RefSeq" id="NP_001401174.1">
    <property type="nucleotide sequence ID" value="NM_001414245.1"/>
</dbReference>
<dbReference type="RefSeq" id="NP_002327.2">
    <property type="nucleotide sequence ID" value="NM_002336.3"/>
</dbReference>
<dbReference type="RefSeq" id="XP_006719141.1">
    <property type="nucleotide sequence ID" value="XM_006719078.3"/>
</dbReference>
<dbReference type="PDB" id="3S2K">
    <property type="method" value="X-ray"/>
    <property type="resolution" value="2.80 A"/>
    <property type="chains" value="A/B=630-1246"/>
</dbReference>
<dbReference type="PDB" id="3S8V">
    <property type="method" value="X-ray"/>
    <property type="resolution" value="3.10 A"/>
    <property type="chains" value="A/B=629-1243"/>
</dbReference>
<dbReference type="PDB" id="3S8Z">
    <property type="method" value="X-ray"/>
    <property type="resolution" value="2.80 A"/>
    <property type="chains" value="A=629-1243"/>
</dbReference>
<dbReference type="PDB" id="3S94">
    <property type="method" value="X-ray"/>
    <property type="resolution" value="2.80 A"/>
    <property type="chains" value="A/B=20-630"/>
</dbReference>
<dbReference type="PDB" id="3SOB">
    <property type="method" value="X-ray"/>
    <property type="resolution" value="1.90 A"/>
    <property type="chains" value="B=20-335"/>
</dbReference>
<dbReference type="PDB" id="3SOQ">
    <property type="method" value="X-ray"/>
    <property type="resolution" value="1.90 A"/>
    <property type="chains" value="A=20-326"/>
</dbReference>
<dbReference type="PDB" id="3SOV">
    <property type="method" value="X-ray"/>
    <property type="resolution" value="1.27 A"/>
    <property type="chains" value="A=20-326"/>
</dbReference>
<dbReference type="PDB" id="4A0P">
    <property type="method" value="X-ray"/>
    <property type="resolution" value="1.90 A"/>
    <property type="chains" value="A=629-1244"/>
</dbReference>
<dbReference type="PDB" id="4DG6">
    <property type="method" value="X-ray"/>
    <property type="resolution" value="2.90 A"/>
    <property type="chains" value="A=20-635"/>
</dbReference>
<dbReference type="PDB" id="4NM5">
    <property type="method" value="X-ray"/>
    <property type="resolution" value="2.30 A"/>
    <property type="chains" value="C=1568-1575"/>
</dbReference>
<dbReference type="PDB" id="4NM7">
    <property type="method" value="X-ray"/>
    <property type="resolution" value="2.30 A"/>
    <property type="chains" value="C=1603-1610"/>
</dbReference>
<dbReference type="PDB" id="5AIR">
    <property type="method" value="X-ray"/>
    <property type="resolution" value="2.53 A"/>
    <property type="chains" value="A/B=1565-1575"/>
</dbReference>
<dbReference type="PDB" id="5FWW">
    <property type="method" value="X-ray"/>
    <property type="resolution" value="3.50 A"/>
    <property type="chains" value="A=630-1246"/>
</dbReference>
<dbReference type="PDB" id="5GJE">
    <property type="method" value="EM"/>
    <property type="resolution" value="21.00 A"/>
    <property type="chains" value="A=20-630, B=631-1246"/>
</dbReference>
<dbReference type="PDB" id="6H15">
    <property type="method" value="X-ray"/>
    <property type="resolution" value="2.60 A"/>
    <property type="chains" value="A/B=630-1244"/>
</dbReference>
<dbReference type="PDB" id="6H16">
    <property type="method" value="X-ray"/>
    <property type="resolution" value="2.90 A"/>
    <property type="chains" value="A=630-1244"/>
</dbReference>
<dbReference type="PDB" id="6L6R">
    <property type="method" value="X-ray"/>
    <property type="resolution" value="3.80 A"/>
    <property type="chains" value="A/B=21-630"/>
</dbReference>
<dbReference type="PDB" id="7NAM">
    <property type="method" value="X-ray"/>
    <property type="resolution" value="1.60 A"/>
    <property type="chains" value="A=20-326"/>
</dbReference>
<dbReference type="PDB" id="8CTG">
    <property type="method" value="EM"/>
    <property type="resolution" value="3.80 A"/>
    <property type="chains" value="C=20-629"/>
</dbReference>
<dbReference type="PDB" id="8DVL">
    <property type="method" value="X-ray"/>
    <property type="resolution" value="2.50 A"/>
    <property type="chains" value="A=631-1253"/>
</dbReference>
<dbReference type="PDB" id="8DVM">
    <property type="method" value="X-ray"/>
    <property type="resolution" value="2.00 A"/>
    <property type="chains" value="A=631-1253"/>
</dbReference>
<dbReference type="PDB" id="8DVN">
    <property type="method" value="X-ray"/>
    <property type="resolution" value="2.53 A"/>
    <property type="chains" value="A=631-1253"/>
</dbReference>
<dbReference type="PDB" id="8FFE">
    <property type="method" value="X-ray"/>
    <property type="resolution" value="1.72 A"/>
    <property type="chains" value="A=20-631"/>
</dbReference>
<dbReference type="PDB" id="8S7C">
    <property type="method" value="X-ray"/>
    <property type="resolution" value="4.70 A"/>
    <property type="chains" value="C/F/I=629-1244"/>
</dbReference>
<dbReference type="PDBsum" id="3S2K"/>
<dbReference type="PDBsum" id="3S8V"/>
<dbReference type="PDBsum" id="3S8Z"/>
<dbReference type="PDBsum" id="3S94"/>
<dbReference type="PDBsum" id="3SOB"/>
<dbReference type="PDBsum" id="3SOQ"/>
<dbReference type="PDBsum" id="3SOV"/>
<dbReference type="PDBsum" id="4A0P"/>
<dbReference type="PDBsum" id="4DG6"/>
<dbReference type="PDBsum" id="4NM5"/>
<dbReference type="PDBsum" id="4NM7"/>
<dbReference type="PDBsum" id="5AIR"/>
<dbReference type="PDBsum" id="5FWW"/>
<dbReference type="PDBsum" id="5GJE"/>
<dbReference type="PDBsum" id="6H15"/>
<dbReference type="PDBsum" id="6H16"/>
<dbReference type="PDBsum" id="6L6R"/>
<dbReference type="PDBsum" id="7NAM"/>
<dbReference type="PDBsum" id="8CTG"/>
<dbReference type="PDBsum" id="8DVL"/>
<dbReference type="PDBsum" id="8DVM"/>
<dbReference type="PDBsum" id="8DVN"/>
<dbReference type="PDBsum" id="8FFE"/>
<dbReference type="PDBsum" id="8S7C"/>
<dbReference type="EMDB" id="EMD-26989"/>
<dbReference type="EMDB" id="EMD-9501"/>
<dbReference type="SMR" id="O75581"/>
<dbReference type="BioGRID" id="110219">
    <property type="interactions" value="172"/>
</dbReference>
<dbReference type="CORUM" id="O75581"/>
<dbReference type="DIP" id="DIP-29884N"/>
<dbReference type="FunCoup" id="O75581">
    <property type="interactions" value="1504"/>
</dbReference>
<dbReference type="IntAct" id="O75581">
    <property type="interactions" value="113"/>
</dbReference>
<dbReference type="MINT" id="O75581"/>
<dbReference type="STRING" id="9606.ENSP00000261349"/>
<dbReference type="BindingDB" id="O75581"/>
<dbReference type="ChEMBL" id="CHEMBL3745588"/>
<dbReference type="GlyCosmos" id="O75581">
    <property type="glycosylation" value="10 sites, No reported glycans"/>
</dbReference>
<dbReference type="GlyGen" id="O75581">
    <property type="glycosylation" value="13 sites, 1 N-linked glycan (1 site)"/>
</dbReference>
<dbReference type="iPTMnet" id="O75581"/>
<dbReference type="PhosphoSitePlus" id="O75581"/>
<dbReference type="SwissPalm" id="O75581"/>
<dbReference type="BioMuta" id="LRP6"/>
<dbReference type="jPOST" id="O75581"/>
<dbReference type="MassIVE" id="O75581"/>
<dbReference type="PaxDb" id="9606-ENSP00000261349"/>
<dbReference type="PeptideAtlas" id="O75581"/>
<dbReference type="ProteomicsDB" id="50097"/>
<dbReference type="Pumba" id="O75581"/>
<dbReference type="ABCD" id="O75581">
    <property type="antibodies" value="29 sequenced antibodies"/>
</dbReference>
<dbReference type="Antibodypedia" id="3851">
    <property type="antibodies" value="594 antibodies from 37 providers"/>
</dbReference>
<dbReference type="DNASU" id="4040"/>
<dbReference type="Ensembl" id="ENST00000261349.9">
    <property type="protein sequence ID" value="ENSP00000261349.4"/>
    <property type="gene ID" value="ENSG00000070018.9"/>
</dbReference>
<dbReference type="Ensembl" id="ENST00000628182.3">
    <property type="protein sequence ID" value="ENSP00000486315.1"/>
    <property type="gene ID" value="ENSG00000281324.3"/>
</dbReference>
<dbReference type="GeneID" id="4040"/>
<dbReference type="KEGG" id="hsa:4040"/>
<dbReference type="MANE-Select" id="ENST00000261349.9">
    <property type="protein sequence ID" value="ENSP00000261349.4"/>
    <property type="RefSeq nucleotide sequence ID" value="NM_002336.3"/>
    <property type="RefSeq protein sequence ID" value="NP_002327.2"/>
</dbReference>
<dbReference type="UCSC" id="uc001rah.6">
    <property type="organism name" value="human"/>
</dbReference>
<dbReference type="AGR" id="HGNC:6698"/>
<dbReference type="CTD" id="4040"/>
<dbReference type="DisGeNET" id="4040"/>
<dbReference type="GeneCards" id="LRP6"/>
<dbReference type="HGNC" id="HGNC:6698">
    <property type="gene designation" value="LRP6"/>
</dbReference>
<dbReference type="HPA" id="ENSG00000070018">
    <property type="expression patterns" value="Low tissue specificity"/>
</dbReference>
<dbReference type="MalaCards" id="LRP6"/>
<dbReference type="MIM" id="603507">
    <property type="type" value="gene"/>
</dbReference>
<dbReference type="MIM" id="610947">
    <property type="type" value="phenotype"/>
</dbReference>
<dbReference type="MIM" id="616724">
    <property type="type" value="phenotype"/>
</dbReference>
<dbReference type="neXtProt" id="NX_O75581"/>
<dbReference type="OpenTargets" id="ENSG00000070018"/>
<dbReference type="Orphanet" id="99798">
    <property type="disease" value="Oligodontia"/>
</dbReference>
<dbReference type="PharmGKB" id="PA30456"/>
<dbReference type="VEuPathDB" id="HostDB:ENSG00000070018"/>
<dbReference type="eggNOG" id="KOG1215">
    <property type="taxonomic scope" value="Eukaryota"/>
</dbReference>
<dbReference type="GeneTree" id="ENSGT00940000158990"/>
<dbReference type="InParanoid" id="O75581"/>
<dbReference type="OMA" id="VNPCKVN"/>
<dbReference type="OrthoDB" id="72419at2759"/>
<dbReference type="PAN-GO" id="O75581">
    <property type="GO annotations" value="6 GO annotations based on evolutionary models"/>
</dbReference>
<dbReference type="PhylomeDB" id="O75581"/>
<dbReference type="TreeFam" id="TF315253"/>
<dbReference type="PathwayCommons" id="O75581"/>
<dbReference type="Reactome" id="R-HSA-201681">
    <property type="pathway name" value="TCF dependent signaling in response to WNT"/>
</dbReference>
<dbReference type="Reactome" id="R-HSA-3772470">
    <property type="pathway name" value="Negative regulation of TCF-dependent signaling by WNT ligand antagonists"/>
</dbReference>
<dbReference type="Reactome" id="R-HSA-4641262">
    <property type="pathway name" value="Disassembly of the destruction complex and recruitment of AXIN to the membrane"/>
</dbReference>
<dbReference type="Reactome" id="R-HSA-4641263">
    <property type="pathway name" value="Regulation of FZD by ubiquitination"/>
</dbReference>
<dbReference type="Reactome" id="R-HSA-5340588">
    <property type="pathway name" value="Signaling by RNF43 mutants"/>
</dbReference>
<dbReference type="SignaLink" id="O75581"/>
<dbReference type="SIGNOR" id="O75581"/>
<dbReference type="BioGRID-ORCS" id="4040">
    <property type="hits" value="13 hits in 1161 CRISPR screens"/>
</dbReference>
<dbReference type="ChiTaRS" id="LRP6">
    <property type="organism name" value="human"/>
</dbReference>
<dbReference type="EvolutionaryTrace" id="O75581"/>
<dbReference type="GeneWiki" id="LRP6"/>
<dbReference type="GenomeRNAi" id="4040"/>
<dbReference type="Pharos" id="O75581">
    <property type="development level" value="Tbio"/>
</dbReference>
<dbReference type="PRO" id="PR:O75581"/>
<dbReference type="Proteomes" id="UP000005640">
    <property type="component" value="Chromosome 12"/>
</dbReference>
<dbReference type="RNAct" id="O75581">
    <property type="molecule type" value="protein"/>
</dbReference>
<dbReference type="Bgee" id="ENSG00000070018">
    <property type="expression patterns" value="Expressed in calcaneal tendon and 106 other cell types or tissues"/>
</dbReference>
<dbReference type="ExpressionAtlas" id="O75581">
    <property type="expression patterns" value="baseline and differential"/>
</dbReference>
<dbReference type="GO" id="GO:0009986">
    <property type="term" value="C:cell surface"/>
    <property type="evidence" value="ECO:0000314"/>
    <property type="project" value="BHF-UCL"/>
</dbReference>
<dbReference type="GO" id="GO:0031410">
    <property type="term" value="C:cytoplasmic vesicle"/>
    <property type="evidence" value="ECO:0000314"/>
    <property type="project" value="UniProtKB"/>
</dbReference>
<dbReference type="GO" id="GO:0031901">
    <property type="term" value="C:early endosome membrane"/>
    <property type="evidence" value="ECO:0000304"/>
    <property type="project" value="Reactome"/>
</dbReference>
<dbReference type="GO" id="GO:0005783">
    <property type="term" value="C:endoplasmic reticulum"/>
    <property type="evidence" value="ECO:0007669"/>
    <property type="project" value="UniProtKB-SubCell"/>
</dbReference>
<dbReference type="GO" id="GO:0005576">
    <property type="term" value="C:extracellular region"/>
    <property type="evidence" value="ECO:0000304"/>
    <property type="project" value="Reactome"/>
</dbReference>
<dbReference type="GO" id="GO:0045121">
    <property type="term" value="C:membrane raft"/>
    <property type="evidence" value="ECO:0007669"/>
    <property type="project" value="UniProtKB-SubCell"/>
</dbReference>
<dbReference type="GO" id="GO:0043025">
    <property type="term" value="C:neuronal cell body"/>
    <property type="evidence" value="ECO:0007669"/>
    <property type="project" value="Ensembl"/>
</dbReference>
<dbReference type="GO" id="GO:0005886">
    <property type="term" value="C:plasma membrane"/>
    <property type="evidence" value="ECO:0000314"/>
    <property type="project" value="UniProtKB"/>
</dbReference>
<dbReference type="GO" id="GO:0045202">
    <property type="term" value="C:synapse"/>
    <property type="evidence" value="ECO:0007669"/>
    <property type="project" value="GOC"/>
</dbReference>
<dbReference type="GO" id="GO:1990909">
    <property type="term" value="C:Wnt signalosome"/>
    <property type="evidence" value="ECO:0000314"/>
    <property type="project" value="ParkinsonsUK-UCL"/>
</dbReference>
<dbReference type="GO" id="GO:1990851">
    <property type="term" value="C:Wnt-Frizzled-LRP5/6 complex"/>
    <property type="evidence" value="ECO:0000314"/>
    <property type="project" value="ParkinsonsUK-UCL"/>
</dbReference>
<dbReference type="GO" id="GO:0015026">
    <property type="term" value="F:coreceptor activity"/>
    <property type="evidence" value="ECO:0000314"/>
    <property type="project" value="BHF-UCL"/>
</dbReference>
<dbReference type="GO" id="GO:0005109">
    <property type="term" value="F:frizzled binding"/>
    <property type="evidence" value="ECO:0000353"/>
    <property type="project" value="BHF-UCL"/>
</dbReference>
<dbReference type="GO" id="GO:0042802">
    <property type="term" value="F:identical protein binding"/>
    <property type="evidence" value="ECO:0000353"/>
    <property type="project" value="IntAct"/>
</dbReference>
<dbReference type="GO" id="GO:0019210">
    <property type="term" value="F:kinase inhibitor activity"/>
    <property type="evidence" value="ECO:0000315"/>
    <property type="project" value="BHF-UCL"/>
</dbReference>
<dbReference type="GO" id="GO:0005041">
    <property type="term" value="F:low-density lipoprotein particle receptor activity"/>
    <property type="evidence" value="ECO:0000314"/>
    <property type="project" value="MGI"/>
</dbReference>
<dbReference type="GO" id="GO:0042803">
    <property type="term" value="F:protein homodimerization activity"/>
    <property type="evidence" value="ECO:0000353"/>
    <property type="project" value="BHF-UCL"/>
</dbReference>
<dbReference type="GO" id="GO:0030291">
    <property type="term" value="F:protein serine/threonine kinase inhibitor activity"/>
    <property type="evidence" value="ECO:0000314"/>
    <property type="project" value="BHF-UCL"/>
</dbReference>
<dbReference type="GO" id="GO:0005102">
    <property type="term" value="F:signaling receptor binding"/>
    <property type="evidence" value="ECO:0000353"/>
    <property type="project" value="BHF-UCL"/>
</dbReference>
<dbReference type="GO" id="GO:0019534">
    <property type="term" value="F:toxin transmembrane transporter activity"/>
    <property type="evidence" value="ECO:0000315"/>
    <property type="project" value="BHF-UCL"/>
</dbReference>
<dbReference type="GO" id="GO:0042813">
    <property type="term" value="F:Wnt receptor activity"/>
    <property type="evidence" value="ECO:0000314"/>
    <property type="project" value="UniProtKB"/>
</dbReference>
<dbReference type="GO" id="GO:0017147">
    <property type="term" value="F:Wnt-protein binding"/>
    <property type="evidence" value="ECO:0000353"/>
    <property type="project" value="BHF-UCL"/>
</dbReference>
<dbReference type="GO" id="GO:0060070">
    <property type="term" value="P:canonical Wnt signaling pathway"/>
    <property type="evidence" value="ECO:0000314"/>
    <property type="project" value="UniProtKB"/>
</dbReference>
<dbReference type="GO" id="GO:0098609">
    <property type="term" value="P:cell-cell adhesion"/>
    <property type="evidence" value="ECO:0007669"/>
    <property type="project" value="Ensembl"/>
</dbReference>
<dbReference type="GO" id="GO:0071397">
    <property type="term" value="P:cellular response to cholesterol"/>
    <property type="evidence" value="ECO:0000315"/>
    <property type="project" value="BHF-UCL"/>
</dbReference>
<dbReference type="GO" id="GO:0007268">
    <property type="term" value="P:chemical synaptic transmission"/>
    <property type="evidence" value="ECO:0007669"/>
    <property type="project" value="Ensembl"/>
</dbReference>
<dbReference type="GO" id="GO:0071542">
    <property type="term" value="P:dopaminergic neuron differentiation"/>
    <property type="evidence" value="ECO:0000250"/>
    <property type="project" value="ParkinsonsUK-UCL"/>
</dbReference>
<dbReference type="GO" id="GO:0006897">
    <property type="term" value="P:endocytosis"/>
    <property type="evidence" value="ECO:0007669"/>
    <property type="project" value="UniProtKB-KW"/>
</dbReference>
<dbReference type="GO" id="GO:1904948">
    <property type="term" value="P:midbrain dopaminergic neuron differentiation"/>
    <property type="evidence" value="ECO:0000304"/>
    <property type="project" value="ParkinsonsUK-UCL"/>
</dbReference>
<dbReference type="GO" id="GO:0034392">
    <property type="term" value="P:negative regulation of smooth muscle cell apoptotic process"/>
    <property type="evidence" value="ECO:0000315"/>
    <property type="project" value="BHF-UCL"/>
</dbReference>
<dbReference type="GO" id="GO:0007399">
    <property type="term" value="P:nervous system development"/>
    <property type="evidence" value="ECO:0000318"/>
    <property type="project" value="GO_Central"/>
</dbReference>
<dbReference type="GO" id="GO:0014033">
    <property type="term" value="P:neural crest cell differentiation"/>
    <property type="evidence" value="ECO:0000314"/>
    <property type="project" value="BHF-UCL"/>
</dbReference>
<dbReference type="GO" id="GO:0014029">
    <property type="term" value="P:neural crest formation"/>
    <property type="evidence" value="ECO:0000314"/>
    <property type="project" value="BHF-UCL"/>
</dbReference>
<dbReference type="GO" id="GO:0045787">
    <property type="term" value="P:positive regulation of cell cycle"/>
    <property type="evidence" value="ECO:0000315"/>
    <property type="project" value="BHF-UCL"/>
</dbReference>
<dbReference type="GO" id="GO:0007204">
    <property type="term" value="P:positive regulation of cytosolic calcium ion concentration"/>
    <property type="evidence" value="ECO:0007669"/>
    <property type="project" value="Ensembl"/>
</dbReference>
<dbReference type="GO" id="GO:0045893">
    <property type="term" value="P:positive regulation of DNA-templated transcription"/>
    <property type="evidence" value="ECO:0000315"/>
    <property type="project" value="BHF-UCL"/>
</dbReference>
<dbReference type="GO" id="GO:0045944">
    <property type="term" value="P:positive regulation of transcription by RNA polymerase II"/>
    <property type="evidence" value="ECO:0000314"/>
    <property type="project" value="BHF-UCL"/>
</dbReference>
<dbReference type="GO" id="GO:0072659">
    <property type="term" value="P:protein localization to plasma membrane"/>
    <property type="evidence" value="ECO:0000353"/>
    <property type="project" value="ParkinsonsUK-UCL"/>
</dbReference>
<dbReference type="GO" id="GO:0043434">
    <property type="term" value="P:response to peptide hormone"/>
    <property type="evidence" value="ECO:0007669"/>
    <property type="project" value="Ensembl"/>
</dbReference>
<dbReference type="GO" id="GO:0016055">
    <property type="term" value="P:Wnt signaling pathway"/>
    <property type="evidence" value="ECO:0000314"/>
    <property type="project" value="ParkinsonsUK-UCL"/>
</dbReference>
<dbReference type="CDD" id="cd00112">
    <property type="entry name" value="LDLa"/>
    <property type="match status" value="3"/>
</dbReference>
<dbReference type="FunFam" id="2.10.25.10:FF:000381">
    <property type="entry name" value="Low-density lipoprotein receptor-related protein 6"/>
    <property type="match status" value="1"/>
</dbReference>
<dbReference type="FunFam" id="2.120.10.30:FF:000001">
    <property type="entry name" value="Low-density lipoprotein receptor-related protein 6"/>
    <property type="match status" value="2"/>
</dbReference>
<dbReference type="FunFam" id="2.120.10.30:FF:000017">
    <property type="entry name" value="Low-density lipoprotein receptor-related protein 6"/>
    <property type="match status" value="1"/>
</dbReference>
<dbReference type="FunFam" id="2.120.10.30:FF:000241">
    <property type="entry name" value="Low-density lipoprotein receptor-related protein 6"/>
    <property type="match status" value="1"/>
</dbReference>
<dbReference type="FunFam" id="4.10.400.10:FF:000016">
    <property type="entry name" value="Low-density lipoprotein receptor-related protein 6"/>
    <property type="match status" value="1"/>
</dbReference>
<dbReference type="FunFam" id="4.10.400.10:FF:000075">
    <property type="entry name" value="Low-density lipoprotein receptor-related protein 6"/>
    <property type="match status" value="1"/>
</dbReference>
<dbReference type="FunFam" id="4.10.400.10:FF:000074">
    <property type="entry name" value="low-density lipoprotein receptor-related protein 6"/>
    <property type="match status" value="1"/>
</dbReference>
<dbReference type="Gene3D" id="2.10.25.10">
    <property type="entry name" value="Laminin"/>
    <property type="match status" value="1"/>
</dbReference>
<dbReference type="Gene3D" id="4.10.400.10">
    <property type="entry name" value="Low-density Lipoprotein Receptor"/>
    <property type="match status" value="3"/>
</dbReference>
<dbReference type="Gene3D" id="2.120.10.30">
    <property type="entry name" value="TolB, C-terminal domain"/>
    <property type="match status" value="4"/>
</dbReference>
<dbReference type="IDEAL" id="IID00531"/>
<dbReference type="InterPro" id="IPR011042">
    <property type="entry name" value="6-blade_b-propeller_TolB-like"/>
</dbReference>
<dbReference type="InterPro" id="IPR050778">
    <property type="entry name" value="Cueball_EGF_LRP_Nidogen"/>
</dbReference>
<dbReference type="InterPro" id="IPR000742">
    <property type="entry name" value="EGF-like_dom"/>
</dbReference>
<dbReference type="InterPro" id="IPR036055">
    <property type="entry name" value="LDL_receptor-like_sf"/>
</dbReference>
<dbReference type="InterPro" id="IPR023415">
    <property type="entry name" value="LDLR_class-A_CS"/>
</dbReference>
<dbReference type="InterPro" id="IPR000033">
    <property type="entry name" value="LDLR_classB_rpt"/>
</dbReference>
<dbReference type="InterPro" id="IPR002172">
    <property type="entry name" value="LDrepeatLR_classA_rpt"/>
</dbReference>
<dbReference type="InterPro" id="IPR017049">
    <property type="entry name" value="LRP5/6"/>
</dbReference>
<dbReference type="PANTHER" id="PTHR46513:SF40">
    <property type="entry name" value="LOW-DENSITY LIPOPROTEIN RECEPTOR-RELATED PROTEIN 6"/>
    <property type="match status" value="1"/>
</dbReference>
<dbReference type="PANTHER" id="PTHR46513">
    <property type="entry name" value="VITELLOGENIN RECEPTOR-LIKE PROTEIN-RELATED-RELATED"/>
    <property type="match status" value="1"/>
</dbReference>
<dbReference type="Pfam" id="PF14670">
    <property type="entry name" value="FXa_inhibition"/>
    <property type="match status" value="4"/>
</dbReference>
<dbReference type="Pfam" id="PF00057">
    <property type="entry name" value="Ldl_recept_a"/>
    <property type="match status" value="3"/>
</dbReference>
<dbReference type="Pfam" id="PF00058">
    <property type="entry name" value="Ldl_recept_b"/>
    <property type="match status" value="11"/>
</dbReference>
<dbReference type="PIRSF" id="PIRSF036314">
    <property type="entry name" value="LDL_recpt-rel_p5/6"/>
    <property type="match status" value="1"/>
</dbReference>
<dbReference type="PRINTS" id="PR00261">
    <property type="entry name" value="LDLRECEPTOR"/>
</dbReference>
<dbReference type="SMART" id="SM00181">
    <property type="entry name" value="EGF"/>
    <property type="match status" value="4"/>
</dbReference>
<dbReference type="SMART" id="SM00192">
    <property type="entry name" value="LDLa"/>
    <property type="match status" value="3"/>
</dbReference>
<dbReference type="SMART" id="SM00135">
    <property type="entry name" value="LY"/>
    <property type="match status" value="20"/>
</dbReference>
<dbReference type="SUPFAM" id="SSF57196">
    <property type="entry name" value="EGF/Laminin"/>
    <property type="match status" value="4"/>
</dbReference>
<dbReference type="SUPFAM" id="SSF57424">
    <property type="entry name" value="LDL receptor-like module"/>
    <property type="match status" value="3"/>
</dbReference>
<dbReference type="SUPFAM" id="SSF63825">
    <property type="entry name" value="YWTD domain"/>
    <property type="match status" value="4"/>
</dbReference>
<dbReference type="PROSITE" id="PS01186">
    <property type="entry name" value="EGF_2"/>
    <property type="match status" value="1"/>
</dbReference>
<dbReference type="PROSITE" id="PS01209">
    <property type="entry name" value="LDLRA_1"/>
    <property type="match status" value="3"/>
</dbReference>
<dbReference type="PROSITE" id="PS50068">
    <property type="entry name" value="LDLRA_2"/>
    <property type="match status" value="3"/>
</dbReference>
<dbReference type="PROSITE" id="PS51120">
    <property type="entry name" value="LDLRB"/>
    <property type="match status" value="19"/>
</dbReference>
<sequence>MGAVLRSLLACSFCVLLRAAPLLLYANRRDLRLVDATNGKENATIVVGGLEDAAAVDFVFSHGLIYWSDVSEEAIKRTEFNKTESVQNVVVSGLLSPDGLACDWLGEKLYWTDSETNRIEVSNLDGSLRKVLFWQELDQPRAIALDPSSGFMYWTDWGEVPKIERAGMDGSSRFIIINSEIYWPNGLTLDYEEQKLYWADAKLNFIHKSNLDGTNRQAVVKGSLPHPFALTLFEDILYWTDWSTHSILACNKYTGEGLREIHSDIFSPMDIHAFSQQRQPNATNPCGIDNGGCSHLCLMSPVKPFYQCACPTGVKLLENGKTCKDGATELLLLARRTDLRRISLDTPDFTDIVLQLEDIRHAIAIDYDPVEGYIYWTDDEVRAIRRSFIDGSGSQFVVTAQIAHPDGIAVDWVARNLYWTDTGTDRIEVTRLNGTMRKILISEDLEEPRAIVLDPMVGYMYWTDWGEIPKIERAALDGSDRVVLVNTSLGWPNGLALDYDEGKIYWGDAKTDKIEVMNTDGTGRRVLVEDKIPHIFGFTLLGDYVYWTDWQRRSIERVHKRSAEREVIIDQLPDLMGLKATNVHRVIGSNPCAEENGGCSHLCLYRPQGLRCACPIGFELISDMKTCIVPEAFLLFSRRADIRRISLETNNNNVAIPLTGVKEASALDFDVTDNRIYWTDISLKTISRAFMNGSALEHVVEFGLDYPEGMAVDWLGKNLYWADTGTNRIEVSKLDGQHRQVLVWKDLDSPRALALDPAEGFMYWTEWGGKPKIDRAAMDGSERTTLVPNVGRANGLTIDYAKRRLYWTDLDTNLIESSNMLGLNREVIADDLPHPFGLTQYQDYIYWTDWSRRSIERANKTSGQNRTIIQGHLDYVMDILVFHSSRQSGWNECASSNGHCSHLCLAVPVGGFVCGCPAHYSLNADNRTCSAPTTFLLFSQKSAINRMVIDEQQSPDIILPIHSLRNVRAIDYDPLDKQLYWIDSRQNMIRKAQEDGSQGFTVVVSSVPSQNLEIQPYDLSIDIYSRYIYWTCEATNVINVTRLDGRSVGVVLKGEQDRPRAVVVNPEKGYMYFTNLQERSPKIERAALDGTEREVLFFSGLSKPIALALDSRLGKLFWADSDLRRIESSDLSGANRIVLEDSNILQPVGLTVFENWLYWIDKQQQMIEKIDMTGREGRTKVQARIAQLSDIHAVKELNLQEYRQHPCAQDNGGCSHICLVKGDGTTRCSCPMHLVLLQDELSCGEPPTCSPQQFTCFTGEIDCIPVAWRCDGFTECEDHSDELNCPVCSESQFQCASGQCIDGALRCNGDANCQDKSDEKNCEVLCLIDQFRCANGQCIGKHKKCDHNVDCSDKSDELDCYPTEEPAPQATNTVGSVIGVIVTIFVSGTVYFICQRMLCPRMKGDGETMTNDYVVHGPASVPLGYVPHPSSLSGSLPGMSRGKSMISSLSIMGGSSGPPYDRAHVTGASSSSSSSTKGTYFPAILNPPPSPATERSHYTMEFGYSSNSPSTHRSYSYRPYSYRHFAPPTTPCSTDVCDSDYAPSRRMTSVATAKGYTSDLNYDSEPVPPPPTPRSQYLSAEENYESCPPSPYTERSYSHHLYPPPPSPCTDSS</sequence>
<reference key="1">
    <citation type="journal article" date="1998" name="Biochem. Biophys. Res. Commun.">
        <title>Isolation and characterization of LRP6, a novel member of the low density lipoprotein receptor gene family.</title>
        <authorList>
            <person name="Brown S.D."/>
            <person name="Twells R.C."/>
            <person name="Hey P.J."/>
            <person name="Cox R.D."/>
            <person name="Levy E.R."/>
            <person name="Soderman A.R."/>
            <person name="Metzker M.L."/>
            <person name="Caskey C.T."/>
            <person name="Todd J.A."/>
            <person name="Hess J.F."/>
        </authorList>
    </citation>
    <scope>NUCLEOTIDE SEQUENCE [MRNA]</scope>
    <scope>VARIANT ILE-1062</scope>
    <source>
        <tissue>Kidney</tissue>
    </source>
</reference>
<reference key="2">
    <citation type="journal article" date="2006" name="Nature">
        <title>The finished DNA sequence of human chromosome 12.</title>
        <authorList>
            <person name="Scherer S.E."/>
            <person name="Muzny D.M."/>
            <person name="Buhay C.J."/>
            <person name="Chen R."/>
            <person name="Cree A."/>
            <person name="Ding Y."/>
            <person name="Dugan-Rocha S."/>
            <person name="Gill R."/>
            <person name="Gunaratne P."/>
            <person name="Harris R.A."/>
            <person name="Hawes A.C."/>
            <person name="Hernandez J."/>
            <person name="Hodgson A.V."/>
            <person name="Hume J."/>
            <person name="Jackson A."/>
            <person name="Khan Z.M."/>
            <person name="Kovar-Smith C."/>
            <person name="Lewis L.R."/>
            <person name="Lozado R.J."/>
            <person name="Metzker M.L."/>
            <person name="Milosavljevic A."/>
            <person name="Miner G.R."/>
            <person name="Montgomery K.T."/>
            <person name="Morgan M.B."/>
            <person name="Nazareth L.V."/>
            <person name="Scott G."/>
            <person name="Sodergren E."/>
            <person name="Song X.-Z."/>
            <person name="Steffen D."/>
            <person name="Lovering R.C."/>
            <person name="Wheeler D.A."/>
            <person name="Worley K.C."/>
            <person name="Yuan Y."/>
            <person name="Zhang Z."/>
            <person name="Adams C.Q."/>
            <person name="Ansari-Lari M.A."/>
            <person name="Ayele M."/>
            <person name="Brown M.J."/>
            <person name="Chen G."/>
            <person name="Chen Z."/>
            <person name="Clerc-Blankenburg K.P."/>
            <person name="Davis C."/>
            <person name="Delgado O."/>
            <person name="Dinh H.H."/>
            <person name="Draper H."/>
            <person name="Gonzalez-Garay M.L."/>
            <person name="Havlak P."/>
            <person name="Jackson L.R."/>
            <person name="Jacob L.S."/>
            <person name="Kelly S.H."/>
            <person name="Li L."/>
            <person name="Li Z."/>
            <person name="Liu J."/>
            <person name="Liu W."/>
            <person name="Lu J."/>
            <person name="Maheshwari M."/>
            <person name="Nguyen B.-V."/>
            <person name="Okwuonu G.O."/>
            <person name="Pasternak S."/>
            <person name="Perez L.M."/>
            <person name="Plopper F.J.H."/>
            <person name="Santibanez J."/>
            <person name="Shen H."/>
            <person name="Tabor P.E."/>
            <person name="Verduzco D."/>
            <person name="Waldron L."/>
            <person name="Wang Q."/>
            <person name="Williams G.A."/>
            <person name="Zhang J."/>
            <person name="Zhou J."/>
            <person name="Allen C.C."/>
            <person name="Amin A.G."/>
            <person name="Anyalebechi V."/>
            <person name="Bailey M."/>
            <person name="Barbaria J.A."/>
            <person name="Bimage K.E."/>
            <person name="Bryant N.P."/>
            <person name="Burch P.E."/>
            <person name="Burkett C.E."/>
            <person name="Burrell K.L."/>
            <person name="Calderon E."/>
            <person name="Cardenas V."/>
            <person name="Carter K."/>
            <person name="Casias K."/>
            <person name="Cavazos I."/>
            <person name="Cavazos S.R."/>
            <person name="Ceasar H."/>
            <person name="Chacko J."/>
            <person name="Chan S.N."/>
            <person name="Chavez D."/>
            <person name="Christopoulos C."/>
            <person name="Chu J."/>
            <person name="Cockrell R."/>
            <person name="Cox C.D."/>
            <person name="Dang M."/>
            <person name="Dathorne S.R."/>
            <person name="David R."/>
            <person name="Davis C.M."/>
            <person name="Davy-Carroll L."/>
            <person name="Deshazo D.R."/>
            <person name="Donlin J.E."/>
            <person name="D'Souza L."/>
            <person name="Eaves K.A."/>
            <person name="Egan A."/>
            <person name="Emery-Cohen A.J."/>
            <person name="Escotto M."/>
            <person name="Flagg N."/>
            <person name="Forbes L.D."/>
            <person name="Gabisi A.M."/>
            <person name="Garza M."/>
            <person name="Hamilton C."/>
            <person name="Henderson N."/>
            <person name="Hernandez O."/>
            <person name="Hines S."/>
            <person name="Hogues M.E."/>
            <person name="Huang M."/>
            <person name="Idlebird D.G."/>
            <person name="Johnson R."/>
            <person name="Jolivet A."/>
            <person name="Jones S."/>
            <person name="Kagan R."/>
            <person name="King L.M."/>
            <person name="Leal B."/>
            <person name="Lebow H."/>
            <person name="Lee S."/>
            <person name="LeVan J.M."/>
            <person name="Lewis L.C."/>
            <person name="London P."/>
            <person name="Lorensuhewa L.M."/>
            <person name="Loulseged H."/>
            <person name="Lovett D.A."/>
            <person name="Lucier A."/>
            <person name="Lucier R.L."/>
            <person name="Ma J."/>
            <person name="Madu R.C."/>
            <person name="Mapua P."/>
            <person name="Martindale A.D."/>
            <person name="Martinez E."/>
            <person name="Massey E."/>
            <person name="Mawhiney S."/>
            <person name="Meador M.G."/>
            <person name="Mendez S."/>
            <person name="Mercado C."/>
            <person name="Mercado I.C."/>
            <person name="Merritt C.E."/>
            <person name="Miner Z.L."/>
            <person name="Minja E."/>
            <person name="Mitchell T."/>
            <person name="Mohabbat F."/>
            <person name="Mohabbat K."/>
            <person name="Montgomery B."/>
            <person name="Moore N."/>
            <person name="Morris S."/>
            <person name="Munidasa M."/>
            <person name="Ngo R.N."/>
            <person name="Nguyen N.B."/>
            <person name="Nickerson E."/>
            <person name="Nwaokelemeh O.O."/>
            <person name="Nwokenkwo S."/>
            <person name="Obregon M."/>
            <person name="Oguh M."/>
            <person name="Oragunye N."/>
            <person name="Oviedo R.J."/>
            <person name="Parish B.J."/>
            <person name="Parker D.N."/>
            <person name="Parrish J."/>
            <person name="Parks K.L."/>
            <person name="Paul H.A."/>
            <person name="Payton B.A."/>
            <person name="Perez A."/>
            <person name="Perrin W."/>
            <person name="Pickens A."/>
            <person name="Primus E.L."/>
            <person name="Pu L.-L."/>
            <person name="Puazo M."/>
            <person name="Quiles M.M."/>
            <person name="Quiroz J.B."/>
            <person name="Rabata D."/>
            <person name="Reeves K."/>
            <person name="Ruiz S.J."/>
            <person name="Shao H."/>
            <person name="Sisson I."/>
            <person name="Sonaike T."/>
            <person name="Sorelle R.P."/>
            <person name="Sutton A.E."/>
            <person name="Svatek A.F."/>
            <person name="Svetz L.A."/>
            <person name="Tamerisa K.S."/>
            <person name="Taylor T.R."/>
            <person name="Teague B."/>
            <person name="Thomas N."/>
            <person name="Thorn R.D."/>
            <person name="Trejos Z.Y."/>
            <person name="Trevino B.K."/>
            <person name="Ukegbu O.N."/>
            <person name="Urban J.B."/>
            <person name="Vasquez L.I."/>
            <person name="Vera V.A."/>
            <person name="Villasana D.M."/>
            <person name="Wang L."/>
            <person name="Ward-Moore S."/>
            <person name="Warren J.T."/>
            <person name="Wei X."/>
            <person name="White F."/>
            <person name="Williamson A.L."/>
            <person name="Wleczyk R."/>
            <person name="Wooden H.S."/>
            <person name="Wooden S.H."/>
            <person name="Yen J."/>
            <person name="Yoon L."/>
            <person name="Yoon V."/>
            <person name="Zorrilla S.E."/>
            <person name="Nelson D."/>
            <person name="Kucherlapati R."/>
            <person name="Weinstock G."/>
            <person name="Gibbs R.A."/>
        </authorList>
    </citation>
    <scope>NUCLEOTIDE SEQUENCE [LARGE SCALE GENOMIC DNA]</scope>
</reference>
<reference key="3">
    <citation type="journal article" date="2004" name="Genome Res.">
        <title>The status, quality, and expansion of the NIH full-length cDNA project: the Mammalian Gene Collection (MGC).</title>
        <authorList>
            <consortium name="The MGC Project Team"/>
        </authorList>
    </citation>
    <scope>NUCLEOTIDE SEQUENCE [LARGE SCALE MRNA]</scope>
    <source>
        <tissue>Cerebellum</tissue>
    </source>
</reference>
<reference key="4">
    <citation type="journal article" date="2001" name="Curr. Biol.">
        <title>Head inducer Dickkopf-1 is a ligand for Wnt coreceptor LRP6.</title>
        <authorList>
            <person name="Semenov M.V."/>
            <person name="Tamai K."/>
            <person name="Brott B.K."/>
            <person name="Kuhl M."/>
            <person name="Sokol S."/>
            <person name="He X."/>
        </authorList>
    </citation>
    <scope>INTERACTION WITH DKK1</scope>
    <scope>FUNCTION</scope>
</reference>
<reference key="5">
    <citation type="journal article" date="2001" name="Nature">
        <title>LDL-receptor-related protein 6 is a receptor for Dickkopf proteins.</title>
        <authorList>
            <person name="Mao B."/>
            <person name="Wu W."/>
            <person name="Li Y."/>
            <person name="Hoppe D."/>
            <person name="Stannek P."/>
            <person name="Glinka A."/>
            <person name="Niehrs C."/>
        </authorList>
    </citation>
    <scope>INTERACTION WITH WNT1</scope>
    <scope>FUNCTION</scope>
</reference>
<reference key="6">
    <citation type="journal article" date="2003" name="J. Biol. Chem.">
        <title>Functional characterization of WNT7A signaling in PC12 cells: interaction with A FZD5 x LRP6 receptor complex and modulation by Dickkopf proteins.</title>
        <authorList>
            <person name="Caricasole A."/>
            <person name="Ferraro T."/>
            <person name="Iacovelli L."/>
            <person name="Barletta E."/>
            <person name="Caruso A."/>
            <person name="Melchiorri D."/>
            <person name="Terstappen G.C."/>
            <person name="Nicoletti F."/>
        </authorList>
    </citation>
    <scope>INTERACTION WITH FZD5; DKK1 AND DKK2</scope>
</reference>
<reference key="7">
    <citation type="journal article" date="2005" name="J. Biol. Chem.">
        <title>Sclerostin binds to LRP5/6 and antagonizes canonical Wnt signaling.</title>
        <authorList>
            <person name="Li X."/>
            <person name="Zhang Y."/>
            <person name="Kang H."/>
            <person name="Liu W."/>
            <person name="Liu P."/>
            <person name="Zhang J."/>
            <person name="Harris S.E."/>
            <person name="Wu D."/>
        </authorList>
    </citation>
    <scope>INTERACTION WITH SOST</scope>
    <scope>FUNCTION</scope>
</reference>
<reference key="8">
    <citation type="journal article" date="2005" name="J. Biol. Chem.">
        <title>SOST is a ligand for LRP5/LRP6 and a Wnt signaling inhibitor.</title>
        <authorList>
            <person name="Semenov M."/>
            <person name="Tamai K."/>
            <person name="He X."/>
        </authorList>
    </citation>
    <scope>INTERACTION WITH WNT1 IN THE WNT-FZD-LRP5-LRP6 COMPLEX</scope>
    <scope>INTERACTION WITH SOST</scope>
</reference>
<reference key="9">
    <citation type="journal article" date="2005" name="Nature">
        <title>A dual-kinase mechanism for Wnt co-receptor phosphorylation and activation.</title>
        <authorList>
            <person name="Zeng X."/>
            <person name="Tamai K."/>
            <person name="Doble B."/>
            <person name="Li S."/>
            <person name="Huang H."/>
            <person name="Habas R."/>
            <person name="Okamura H."/>
            <person name="Woodgett J."/>
            <person name="He X."/>
        </authorList>
    </citation>
    <scope>PHOSPHORYLATION OF PPPSP MOTIFS</scope>
    <scope>PHOSPHORYLATION AT SER-1490 AND THR-1493</scope>
    <scope>FUNCTION</scope>
</reference>
<reference key="10">
    <citation type="journal article" date="2006" name="Genes Dev.">
        <title>The role of microtubule actin cross-linking factor 1 (MACF1) in the Wnt signaling pathway.</title>
        <authorList>
            <person name="Chen H.J."/>
            <person name="Lin C.M."/>
            <person name="Lin C.S."/>
            <person name="Perez-Olle R."/>
            <person name="Leung C.L."/>
            <person name="Liem R.K."/>
        </authorList>
    </citation>
    <scope>INTERACTION WITH MACF1</scope>
</reference>
<reference key="11">
    <citation type="journal article" date="2006" name="J. Biol. Chem.">
        <title>Negative regulation of LRP6 function by casein kinase I epsilon phosphorylation.</title>
        <authorList>
            <person name="Swiatek W."/>
            <person name="Kang H."/>
            <person name="Garcia B.A."/>
            <person name="Shabanowitz J."/>
            <person name="Coombs G.S."/>
            <person name="Hunt D.F."/>
            <person name="Virshup D.M."/>
        </authorList>
    </citation>
    <scope>PHOSPHORYLATION AT SER-1420 AND SER-1430</scope>
    <scope>FUNCTION</scope>
    <scope>INTERACTION WITH CSNKIE AND AXIN1</scope>
    <scope>IDENTIFICATION BY MASS SPECTROMETRY</scope>
    <scope>MUTAGENESIS OF SER-1420 AND SER-1430</scope>
</reference>
<reference key="12">
    <citation type="journal article" date="2007" name="J. Biol. Chem.">
        <title>R-spondin1 is a high affinity ligand for LRP6 and induces LRP6 phosphorylation and beta-catenin signaling.</title>
        <authorList>
            <person name="Wei Q."/>
            <person name="Yokota C."/>
            <person name="Semenov M.V."/>
            <person name="Doble B."/>
            <person name="Woodgett J."/>
            <person name="He X."/>
        </authorList>
    </citation>
    <scope>INTERACTION WITH RSPO1</scope>
    <scope>FUNCTION</scope>
    <scope>PHOSPHORYLATION</scope>
</reference>
<reference key="13">
    <citation type="journal article" date="2007" name="J. Neurochem.">
        <title>Regulated proteolytic processing of LRP6 results in release of its intracellular domain.</title>
        <authorList>
            <person name="Mi K."/>
            <person name="Johnson G.V."/>
        </authorList>
    </citation>
    <scope>PROTEOLYTIC PROCESSING</scope>
    <scope>FUNCTION</scope>
</reference>
<reference key="14">
    <citation type="journal article" date="2007" name="Mol. Cell. Biol.">
        <title>Analysis of endogenous LRP6 function reveals a novel feedback mechanism by which Wnt negatively regulates its receptor.</title>
        <authorList>
            <person name="Khan Z."/>
            <person name="Vijayakumar S."/>
            <person name="de la Torre T.V."/>
            <person name="Rotolo S."/>
            <person name="Bafico A."/>
        </authorList>
    </citation>
    <scope>GLYCOSYLATION</scope>
    <scope>PHOSPHORYLATION AT SER-1490</scope>
    <scope>INTERACTION WITH AXIN1</scope>
    <scope>HOMODIMERIZATION</scope>
    <scope>INDUCTION</scope>
    <scope>SUBCELLULAR LOCATION</scope>
</reference>
<reference key="15">
    <citation type="journal article" date="2007" name="Proc. Natl. Acad. Sci. U.S.A.">
        <title>R-Spondin1 regulates Wnt signaling by inhibiting internalization of LRP6.</title>
        <authorList>
            <person name="Binnerts M.E."/>
            <person name="Kim K.A."/>
            <person name="Bright J.M."/>
            <person name="Patel S.M."/>
            <person name="Tran K."/>
            <person name="Zhou M."/>
            <person name="Leung J.M."/>
            <person name="Liu Y."/>
            <person name="Lomas W.E. III"/>
            <person name="Dixon M."/>
            <person name="Hazell S.A."/>
            <person name="Wagle M."/>
            <person name="Nie W.S."/>
            <person name="Tomasevic N."/>
            <person name="Williams J."/>
            <person name="Zhan X."/>
            <person name="Levy M.D."/>
            <person name="Funk W.D."/>
            <person name="Abo A."/>
        </authorList>
    </citation>
    <scope>INTERACTION WITH KREM1 AND DKK1</scope>
</reference>
<reference key="16">
    <citation type="journal article" date="2007" name="Science">
        <title>Wnt induces LRP6 signalosomes and promotes dishevelled-dependent LRP6 phosphorylation.</title>
        <authorList>
            <person name="Bilic J."/>
            <person name="Huang Y.L."/>
            <person name="Davidson G."/>
            <person name="Zimmermann T."/>
            <person name="Cruciat C.M."/>
            <person name="Bienz M."/>
            <person name="Niehrs C."/>
        </authorList>
    </citation>
    <scope>PHOSPHORYLATION AT THR-1479</scope>
    <scope>INTERACTION WITH AXIN1</scope>
    <scope>SUBUNIT</scope>
    <scope>SUBCELLULAR LOCATION</scope>
</reference>
<reference key="17">
    <citation type="journal article" date="2008" name="J. Biol. Chem.">
        <title>Wnt signal amplification via activity, cooperativity, and regulation of multiple intracellular PPPSP motifs in the Wnt co-receptor LRP6.</title>
        <authorList>
            <person name="MacDonald B.T."/>
            <person name="Yokota C."/>
            <person name="Tamai K."/>
            <person name="Zeng X."/>
            <person name="He X."/>
        </authorList>
    </citation>
    <scope>INTERACTION WITH AXIN1</scope>
    <scope>PHOSPHORYLATION</scope>
    <scope>MUTAGENESIS OF LEU-1485; ASN-1486; PRO-1487; PRO-1488; PRO-1489; SER-1490; PRO-1491; ALA-1492; THR-1493; GLU-1494; ARG-1495; THR-1529; THR-1530; PRO-1531; THR-1572; SER-1590 AND SER-1607</scope>
</reference>
<reference key="18">
    <citation type="journal article" date="2008" name="J. Cell Biol.">
        <title>Caprin-2 enhances canonical Wnt signaling through regulating LRP5/6 phosphorylation.</title>
        <authorList>
            <person name="Ding Y."/>
            <person name="Xi Y."/>
            <person name="Chen T."/>
            <person name="Wang J.Y."/>
            <person name="Tao D.L."/>
            <person name="Wu Z.L."/>
            <person name="Li Y.P."/>
            <person name="Li C."/>
            <person name="Zeng R."/>
            <person name="Li L."/>
        </authorList>
    </citation>
    <scope>INTERACTION WITH CAPRIN2</scope>
    <scope>PHOSPHORYLATION AT SER-1490</scope>
</reference>
<reference key="19">
    <citation type="journal article" date="2008" name="PLoS ONE">
        <title>Direct inhibition of GSK3beta by the phosphorylated cytoplasmic domain of LRP6 in Wnt/beta-catenin signaling.</title>
        <authorList>
            <person name="Piao S."/>
            <person name="Lee S.H."/>
            <person name="Kim H."/>
            <person name="Yum S."/>
            <person name="Stamos J.L."/>
            <person name="Xu Y."/>
            <person name="Lee S.J."/>
            <person name="Lee J."/>
            <person name="Oh S."/>
            <person name="Han J.K."/>
            <person name="Park B.J."/>
            <person name="Weis W.I."/>
            <person name="Ha N.C."/>
        </authorList>
    </citation>
    <scope>PHOSPHORYLATION ON PPPSP MOTIFS</scope>
    <scope>FUNCTION</scope>
</reference>
<reference key="20">
    <citation type="journal article" date="2008" name="Proc. Natl. Acad. Sci. U.S.A.">
        <title>Palmitoylation and ubiquitination regulate exit of the Wnt signaling protein LRP6 from the endoplasmic reticulum.</title>
        <authorList>
            <person name="Abrami L."/>
            <person name="Kunz B."/>
            <person name="Iacovache I."/>
            <person name="van der Goot F.G."/>
        </authorList>
    </citation>
    <scope>PALMITOYLATION AT CYS-1394 AND CYS-1399</scope>
    <scope>UBIQUITINATION AT LYS-1403</scope>
    <scope>SUBCELLULAR LOCATION</scope>
    <scope>MUTAGENESIS OF CYS-1394 AND CYS-1399</scope>
</reference>
<reference key="21">
    <citation type="journal article" date="2009" name="Dev. Cell">
        <title>Cell cycle control of wnt receptor activation.</title>
        <authorList>
            <person name="Davidson G."/>
            <person name="Shen J."/>
            <person name="Huang Y.L."/>
            <person name="Su Y."/>
            <person name="Karaulanov E."/>
            <person name="Bartscherer K."/>
            <person name="Hassler C."/>
            <person name="Stannek P."/>
            <person name="Boutros M."/>
            <person name="Niehrs C."/>
        </authorList>
    </citation>
    <scope>DOMAIN PPPSP MOTIF</scope>
    <scope>PHOSPHORYLATION AT SER-1490</scope>
</reference>
<reference key="22">
    <citation type="journal article" date="2009" name="J. Biol. Chem.">
        <title>G Protein-coupled receptor kinases phosphorylate LRP6 in the Wnt pathway.</title>
        <authorList>
            <person name="Chen M."/>
            <person name="Philipp M."/>
            <person name="Wang J."/>
            <person name="Premont R.T."/>
            <person name="Garrison T.R."/>
            <person name="Caron M.G."/>
            <person name="Lefkowitz R.J."/>
            <person name="Chen W."/>
        </authorList>
    </citation>
    <scope>PHOSPHORYLATION OF PPPSP MOTIFS</scope>
    <scope>PHOSPHORYLATION AT SER-1490</scope>
    <scope>FUNCTION</scope>
</reference>
<reference key="23">
    <citation type="journal article" date="2009" name="PLoS ONE">
        <title>Inhibition of GSK3 phosphorylation of beta-catenin via phosphorylated PPPSPXS motifs of Wnt coreceptor LRP6.</title>
        <authorList>
            <person name="Wu G."/>
            <person name="Huang H."/>
            <person name="Garcia Abreu J."/>
            <person name="He X."/>
        </authorList>
    </citation>
    <scope>PHOSPHORYLATION OF PPPSP MOTIFS</scope>
    <scope>FUNCTION</scope>
</reference>
<reference key="24">
    <citation type="journal article" date="2010" name="J. Biol. Chem.">
        <title>Reconstitution of a frizzled8.Wnt3a.LRP6 signaling complex reveals multiple Wnt and Dkk1 binding sites on LRP6.</title>
        <authorList>
            <person name="Bourhis E."/>
            <person name="Tam C."/>
            <person name="Franke Y."/>
            <person name="Bazan J.F."/>
            <person name="Ernst J."/>
            <person name="Hwang J."/>
            <person name="Costa M."/>
            <person name="Cochran A.G."/>
            <person name="Hannoush R.N."/>
        </authorList>
    </citation>
    <scope>INTERACTION WITH WNT3A; WNT9B AND FZD8 IN THE WNT/FZD/LRP6 COMPLEX</scope>
    <scope>INTERACTION WITH DKK1</scope>
</reference>
<reference key="25">
    <citation type="journal article" date="2011" name="Mol. Cell. Biol.">
        <title>Transmembrane protein 198 promotes LRP6 phosphorylation and Wnt signaling activation.</title>
        <authorList>
            <person name="Liang J."/>
            <person name="Fu Y."/>
            <person name="Cruciat C.M."/>
            <person name="Jia S."/>
            <person name="Wang Y."/>
            <person name="Tong Z."/>
            <person name="Tao Q."/>
            <person name="Ingelfinger D."/>
            <person name="Boutros M."/>
            <person name="Meng A."/>
            <person name="Niehrs C."/>
            <person name="Wu W."/>
        </authorList>
    </citation>
    <scope>INTERACTION WITH TMEM198</scope>
</reference>
<reference key="26">
    <citation type="journal article" date="2012" name="EMBO J.">
        <title>Disabled-2 (Dab2) inhibits Wnt/beta-catenin signalling by binding LRP6 and promoting its internalization through clathrin.</title>
        <authorList>
            <person name="Jiang Y."/>
            <person name="He X."/>
            <person name="Howe P.H."/>
        </authorList>
    </citation>
    <scope>INTERACTION WITH DAB2</scope>
</reference>
<reference key="27">
    <citation type="journal article" date="2012" name="Nature">
        <title>ZNRF3 promotes Wnt receptor turnover in an R-spondin-sensitive manner.</title>
        <authorList>
            <person name="Hao H.X."/>
            <person name="Xie Y."/>
            <person name="Zhang Y."/>
            <person name="Charlat O."/>
            <person name="Oster E."/>
            <person name="Avello M."/>
            <person name="Lei H."/>
            <person name="Mickanin C."/>
            <person name="Liu D."/>
            <person name="Ruffner H."/>
            <person name="Mao X."/>
            <person name="Ma Q."/>
            <person name="Zamponi R."/>
            <person name="Bouwmeester T."/>
            <person name="Finan P.M."/>
            <person name="Kirschner M.W."/>
            <person name="Porter J.A."/>
            <person name="Serluca F.C."/>
            <person name="Cong F."/>
        </authorList>
    </citation>
    <scope>UBIQUITINATION BY ZNRF3</scope>
</reference>
<reference key="28">
    <citation type="journal article" date="2013" name="Dev. Cell">
        <title>Lypd6 enhances Wnt/beta-catenin signaling by promoting Lrp6 phosphorylation in raft plasma membrane domains.</title>
        <authorList>
            <person name="Oezhan G."/>
            <person name="Sezgin E."/>
            <person name="Wehner D."/>
            <person name="Pfister A.S."/>
            <person name="Kuehl S.J."/>
            <person name="Kagermeier-Schenk B."/>
            <person name="Kuehl M."/>
            <person name="Schwille P."/>
            <person name="Weidinger G."/>
        </authorList>
    </citation>
    <scope>INTERACTION WITH LYPD6</scope>
    <scope>SUBCELLULAR LOCATION</scope>
</reference>
<reference key="29">
    <citation type="journal article" date="2013" name="J. Proteome Res.">
        <title>Toward a comprehensive characterization of a human cancer cell phosphoproteome.</title>
        <authorList>
            <person name="Zhou H."/>
            <person name="Di Palma S."/>
            <person name="Preisinger C."/>
            <person name="Peng M."/>
            <person name="Polat A.N."/>
            <person name="Heck A.J."/>
            <person name="Mohammed S."/>
        </authorList>
    </citation>
    <scope>PHOSPHORYLATION [LARGE SCALE ANALYSIS] AT SER-1490</scope>
    <scope>IDENTIFICATION BY MASS SPECTROMETRY [LARGE SCALE ANALYSIS]</scope>
    <source>
        <tissue>Cervix carcinoma</tissue>
        <tissue>Erythroleukemia</tissue>
    </source>
</reference>
<reference key="30">
    <citation type="journal article" date="2013" name="Proc. Natl. Acad. Sci. U.S.A.">
        <title>Essential roles of grp94 in gut homeostasis via chaperoning canonical Wnt pathway.</title>
        <authorList>
            <person name="Liu B."/>
            <person name="Staron M."/>
            <person name="Hong F."/>
            <person name="Wu B.X."/>
            <person name="Sun S."/>
            <person name="Morales C."/>
            <person name="Crosson C.E."/>
            <person name="Tomlinson S."/>
            <person name="Kim I."/>
            <person name="Wu D."/>
            <person name="Li Z."/>
        </authorList>
    </citation>
    <scope>SUBCELLULAR LOCATION</scope>
</reference>
<reference key="31">
    <citation type="journal article" date="2014" name="J. Biol. Chem.">
        <title>Structural insights into the C1q domain of Caprin-2 in canonical Wnt signaling.</title>
        <authorList>
            <person name="Miao H."/>
            <person name="Jia Y."/>
            <person name="Xie S."/>
            <person name="Wang X."/>
            <person name="Zhao J."/>
            <person name="Chu Y."/>
            <person name="Zhou Z."/>
            <person name="Shi Z."/>
            <person name="Song X."/>
            <person name="Li L."/>
        </authorList>
    </citation>
    <scope>INTERACTION WITH CAPRIN2</scope>
    <scope>PHOSPHORYLATION AT SER-1490</scope>
</reference>
<reference key="32">
    <citation type="journal article" date="2016" name="J. Biol. Chem.">
        <title>Caprin-2 positively regulates CDK14/Cyclin Y-mediated LRP5/6 constitutive phosphorylation.</title>
        <authorList>
            <person name="Wang X."/>
            <person name="Jia Y."/>
            <person name="Fei C."/>
            <person name="Song X."/>
            <person name="Li L."/>
        </authorList>
    </citation>
    <scope>IDENTIFICATION IN A COMPLEX WITH CAPRIN2; CCNY AND CDK14</scope>
    <scope>PHOSPHORYLATION AT SER-1490</scope>
</reference>
<reference key="33">
    <citation type="journal article" date="2016" name="Structure">
        <title>Structure of the dual-mode wnt regulator Kremen1 and insight into ternary complex formation with LRP6 and Dickkopf.</title>
        <authorList>
            <person name="Zebisch M."/>
            <person name="Jackson V.A."/>
            <person name="Zhao Y."/>
            <person name="Jones E.Y."/>
        </authorList>
    </citation>
    <scope>IDENTIFICATION IN A TERNARY COMPLEX WITH KREM1 AND LRP6</scope>
</reference>
<reference key="34">
    <citation type="journal article" date="2017" name="EMBO Rep.">
        <title>Parkinson's disease-associated receptor GPR37 is an ER chaperone for LRP6.</title>
        <authorList>
            <person name="Berger B.S."/>
            <person name="Acebron S.P."/>
            <person name="Herbst J."/>
            <person name="Koch S."/>
            <person name="Niehrs C."/>
        </authorList>
    </citation>
    <scope>FUNCTION</scope>
    <scope>INTERACTION WITH GPR37</scope>
</reference>
<reference key="35">
    <citation type="journal article" date="2018" name="FEBS Lett.">
        <title>Structure of the Wnt signaling enhancer LYPD6 and its interactions with the Wnt coreceptor LRP6.</title>
        <authorList>
            <person name="Zhao Y."/>
            <person name="Ren J."/>
            <person name="Lu W."/>
            <person name="Harlos K."/>
            <person name="Jones E.Y."/>
        </authorList>
    </citation>
    <scope>INTERACTION WITH LYPD6</scope>
</reference>
<reference key="36">
    <citation type="journal article" date="2019" name="Science">
        <title>LMBR1L regulates lymphopoiesis through Wnt/beta-catenin signaling.</title>
        <authorList>
            <person name="Choi J.H."/>
            <person name="Zhong X."/>
            <person name="McAlpine W."/>
            <person name="Liao T.C."/>
            <person name="Zhang D."/>
            <person name="Fang B."/>
            <person name="Russell J."/>
            <person name="Ludwig S."/>
            <person name="Nair-Gill E."/>
            <person name="Zhang Z."/>
            <person name="Wang K.W."/>
            <person name="Misawa T."/>
            <person name="Zhan X."/>
            <person name="Choi M."/>
            <person name="Wang T."/>
            <person name="Li X."/>
            <person name="Tang M."/>
            <person name="Sun Q."/>
            <person name="Yu L."/>
            <person name="Murray A.R."/>
            <person name="Moresco E.M.Y."/>
            <person name="Beutler B."/>
        </authorList>
    </citation>
    <scope>INTERACTION WITH LMBR1L</scope>
</reference>
<reference key="37">
    <citation type="journal article" date="2011" name="Dev. Cell">
        <title>Structural basis of Wnt signaling inhibition by Dickkopf binding to LRP5/6.</title>
        <authorList>
            <person name="Ahn V.E."/>
            <person name="Chu M.L."/>
            <person name="Choi H.J."/>
            <person name="Tran D."/>
            <person name="Abo A."/>
            <person name="Weis W.I."/>
        </authorList>
    </citation>
    <scope>X-RAY CRYSTALLOGRAPHY (2.8 ANGSTROMS) OF 630-1246 IN COMPLEX WITH DKK1</scope>
    <scope>SUBUNIT</scope>
    <scope>DISULFIDE BONDS</scope>
    <scope>GLYCOSYLATION AT ASN-692; ASN-859; ASN-865; ASN-926 AND ASN-1039</scope>
</reference>
<reference key="38">
    <citation type="journal article" date="2007" name="Science">
        <title>LRP6 mutation in a family with early coronary disease and metabolic risk factors.</title>
        <authorList>
            <person name="Mani A."/>
            <person name="Radhakrishnan J."/>
            <person name="Wang H."/>
            <person name="Mani A."/>
            <person name="Mani M.-A."/>
            <person name="Nelson-Williams C."/>
            <person name="Carew K.S."/>
            <person name="Mane S."/>
            <person name="Najmabadi H."/>
            <person name="Wu D."/>
            <person name="Lifton R.P."/>
        </authorList>
    </citation>
    <scope>VARIANT ADCAD2 CYS-611</scope>
    <scope>CHARACTERIZATION OF VARIANT ADCAD2 CYS-611</scope>
</reference>
<reference key="39">
    <citation type="journal article" date="2013" name="Hum. Mutat.">
        <title>Rare nonconservative LRP6 mutations are associated with metabolic syndrome.</title>
        <authorList>
            <person name="Singh R."/>
            <person name="Smith E."/>
            <person name="Fathzadeh M."/>
            <person name="Liu W."/>
            <person name="Go G.W."/>
            <person name="Subrahmanyan L."/>
            <person name="Faramarzi S."/>
            <person name="McKenna W."/>
            <person name="Mani A."/>
        </authorList>
    </citation>
    <scope>VARIANTS ADCAD2 HIS-360; SER-433 AND GLN-473</scope>
    <scope>CHARACTERIZATION OF VARIANT ADCAD2 GLN-473</scope>
</reference>
<reference key="40">
    <citation type="journal article" date="2015" name="Am. J. Hum. Genet.">
        <title>Loss-of-Function Mutations in the WNT Co-receptor LRP6 Cause Autosomal-Dominant Oligodontia.</title>
        <authorList>
            <person name="Massink M.P."/>
            <person name="Creton M.A."/>
            <person name="Spanevello F."/>
            <person name="Fennis W.M."/>
            <person name="Cune M.S."/>
            <person name="Savelberg S.M."/>
            <person name="Nijman I.J."/>
            <person name="Maurice M.M."/>
            <person name="van den Boogaard M.J."/>
            <person name="van Haaften G."/>
        </authorList>
    </citation>
    <scope>INVOLVEMENT IN STHAG7</scope>
    <scope>VARIANT STHAG7 VAL-19</scope>
    <scope>CHARACTERIZATION OF VARIANT STHAG7 VAL-19</scope>
    <scope>SUBCELLULAR LOCATION</scope>
</reference>
<reference key="41">
    <citation type="journal article" date="2018" name="Neuron">
        <title>De Novo Mutation in Genes Regulating Neural Stem Cell Fate in Human Congenital Hydrocephalus.</title>
        <authorList>
            <person name="Furey C.G."/>
            <person name="Choi J."/>
            <person name="Jin S.C."/>
            <person name="Zeng X."/>
            <person name="Timberlake A.T."/>
            <person name="Nelson-Williams C."/>
            <person name="Mansuri M.S."/>
            <person name="Lu Q."/>
            <person name="Duran D."/>
            <person name="Panchagnula S."/>
            <person name="Allocco A."/>
            <person name="Karimy J.K."/>
            <person name="Khanna A."/>
            <person name="Gaillard J.R."/>
            <person name="DeSpenza T."/>
            <person name="Antwi P."/>
            <person name="Loring E."/>
            <person name="Butler W.E."/>
            <person name="Smith E.R."/>
            <person name="Warf B.C."/>
            <person name="Strahle J.M."/>
            <person name="Limbrick D.D."/>
            <person name="Storm P.B."/>
            <person name="Heuer G."/>
            <person name="Jackson E.M."/>
            <person name="Iskandar B.J."/>
            <person name="Johnston J.M."/>
            <person name="Tikhonova I."/>
            <person name="Castaldi C."/>
            <person name="Lopez-Giraldez F."/>
            <person name="Bjornson R.D."/>
            <person name="Knight J.R."/>
            <person name="Bilguvar K."/>
            <person name="Mane S."/>
            <person name="Alper S.L."/>
            <person name="Haider S."/>
            <person name="Guclu B."/>
            <person name="Bayri Y."/>
            <person name="Sahin Y."/>
            <person name="Apuzzo M.L.J."/>
            <person name="Duncan C.C."/>
            <person name="DiLuna M.L."/>
            <person name="Guenel M."/>
            <person name="Lifton R.P."/>
            <person name="Kahle K.T."/>
        </authorList>
    </citation>
    <scope>VARIANT PHE-1415</scope>
</reference>
<evidence type="ECO:0000250" key="1">
    <source>
        <dbReference type="UniProtKB" id="O88572"/>
    </source>
</evidence>
<evidence type="ECO:0000255" key="2"/>
<evidence type="ECO:0000255" key="3">
    <source>
        <dbReference type="PROSITE-ProRule" id="PRU00124"/>
    </source>
</evidence>
<evidence type="ECO:0000256" key="4">
    <source>
        <dbReference type="SAM" id="MobiDB-lite"/>
    </source>
</evidence>
<evidence type="ECO:0000269" key="5">
    <source>
    </source>
</evidence>
<evidence type="ECO:0000269" key="6">
    <source>
    </source>
</evidence>
<evidence type="ECO:0000269" key="7">
    <source>
    </source>
</evidence>
<evidence type="ECO:0000269" key="8">
    <source>
    </source>
</evidence>
<evidence type="ECO:0000269" key="9">
    <source>
    </source>
</evidence>
<evidence type="ECO:0000269" key="10">
    <source>
    </source>
</evidence>
<evidence type="ECO:0000269" key="11">
    <source>
    </source>
</evidence>
<evidence type="ECO:0000269" key="12">
    <source>
    </source>
</evidence>
<evidence type="ECO:0000269" key="13">
    <source>
    </source>
</evidence>
<evidence type="ECO:0000269" key="14">
    <source>
    </source>
</evidence>
<evidence type="ECO:0000269" key="15">
    <source>
    </source>
</evidence>
<evidence type="ECO:0000269" key="16">
    <source>
    </source>
</evidence>
<evidence type="ECO:0000269" key="17">
    <source>
    </source>
</evidence>
<evidence type="ECO:0000269" key="18">
    <source>
    </source>
</evidence>
<evidence type="ECO:0000269" key="19">
    <source>
    </source>
</evidence>
<evidence type="ECO:0000269" key="20">
    <source>
    </source>
</evidence>
<evidence type="ECO:0000269" key="21">
    <source>
    </source>
</evidence>
<evidence type="ECO:0000269" key="22">
    <source>
    </source>
</evidence>
<evidence type="ECO:0000269" key="23">
    <source>
    </source>
</evidence>
<evidence type="ECO:0000269" key="24">
    <source>
    </source>
</evidence>
<evidence type="ECO:0000269" key="25">
    <source>
    </source>
</evidence>
<evidence type="ECO:0000269" key="26">
    <source>
    </source>
</evidence>
<evidence type="ECO:0000269" key="27">
    <source>
    </source>
</evidence>
<evidence type="ECO:0000269" key="28">
    <source>
    </source>
</evidence>
<evidence type="ECO:0000269" key="29">
    <source>
    </source>
</evidence>
<evidence type="ECO:0000269" key="30">
    <source>
    </source>
</evidence>
<evidence type="ECO:0000269" key="31">
    <source>
    </source>
</evidence>
<evidence type="ECO:0000269" key="32">
    <source>
    </source>
</evidence>
<evidence type="ECO:0000269" key="33">
    <source>
    </source>
</evidence>
<evidence type="ECO:0000269" key="34">
    <source>
    </source>
</evidence>
<evidence type="ECO:0000269" key="35">
    <source>
    </source>
</evidence>
<evidence type="ECO:0000269" key="36">
    <source>
    </source>
</evidence>
<evidence type="ECO:0000269" key="37">
    <source>
    </source>
</evidence>
<evidence type="ECO:0000269" key="38">
    <source>
    </source>
</evidence>
<evidence type="ECO:0000269" key="39">
    <source>
    </source>
</evidence>
<evidence type="ECO:0000269" key="40">
    <source>
    </source>
</evidence>
<evidence type="ECO:0000269" key="41">
    <source>
    </source>
</evidence>
<evidence type="ECO:0000305" key="42"/>
<evidence type="ECO:0000305" key="43">
    <source>
    </source>
</evidence>
<evidence type="ECO:0007744" key="44">
    <source>
    </source>
</evidence>
<evidence type="ECO:0007829" key="45">
    <source>
        <dbReference type="PDB" id="3SOV"/>
    </source>
</evidence>
<evidence type="ECO:0007829" key="46">
    <source>
        <dbReference type="PDB" id="4A0P"/>
    </source>
</evidence>
<evidence type="ECO:0007829" key="47">
    <source>
        <dbReference type="PDB" id="4DG6"/>
    </source>
</evidence>
<evidence type="ECO:0007829" key="48">
    <source>
        <dbReference type="PDB" id="8DVM"/>
    </source>
</evidence>
<evidence type="ECO:0007829" key="49">
    <source>
        <dbReference type="PDB" id="8DVN"/>
    </source>
</evidence>
<evidence type="ECO:0007829" key="50">
    <source>
        <dbReference type="PDB" id="8FFE"/>
    </source>
</evidence>
<name>LRP6_HUMAN</name>
<comment type="function">
    <text evidence="1 5 6 8 10 11 13 15 22 23 24 38">Component of the Wnt-Fzd-LRP5-LRP6 complex that triggers beta-catenin signaling through inducing aggregation of receptor-ligand complexes into ribosome-sized signalosomes (PubMed:11357136, PubMed:11448771, PubMed:15778503, PubMed:16341017, PubMed:16513652, PubMed:17326769, PubMed:17400545, PubMed:19107203, PubMed:19293931, PubMed:19801552, PubMed:28341812). Cell-surface coreceptor of Wnt/beta-catenin signaling, which plays a pivotal role in bone formation (PubMed:11357136, PubMed:11448771, PubMed:15778503, PubMed:16341017, PubMed:16513652, PubMed:17326769, PubMed:17400545, PubMed:19107203, PubMed:19293931, PubMed:19801552, PubMed:28341812). The Wnt-induced Fzd/LRP6 coreceptor complex recruits DVL1 polymers to the plasma membrane which, in turn, recruits the AXIN1/GSK3B-complex to the cell surface promoting the formation of signalosomes and inhibiting AXIN1/GSK3-mediated phosphorylation and destruction of beta-catenin (PubMed:16513652). Required for posterior patterning of the epiblast during gastrulation (By similarity).</text>
</comment>
<comment type="subunit">
    <text evidence="1 5 6 7 8 9 11 12 15 16 17 18 19 21 26 27 28 29 33 34 36 37 38 40 43">Homodimer; disulfide-linked. Forms phosphorylated oligomer aggregates on Wnt-signaling. Forms a WNT-signaling complex formed of a WNT protein, a FZD protein and LRP5 or LRP6. Interacts (via the extracellular domain) with WNT1; the interaction is enhanced by prior formation of the Wnt/Fzd complex. Interacts (via the beta-propeller regions 3 and 4) with WNT3A. Interacts (via the beta-propeller regions 1 and 2) with WNT9B. Interacts with FZD5; the interaction forms a coreceptor complex for Wnt signaling and is inhibited by DKK1 and DRAXIN. Interacts (via beta propeller region) with DKK1; the interaction inhibits FZD5/LRP6 complex formation. Interacts with DKK2. Interacts with C1orf187/DRAXIN; the interaction inhibits Wnt signaling (By similarity). Interacts (via the phosphorylated PPPSP motifs) with AXIN1; the interaction recruits the AXIN1/GSK3B complex to cell surface LRP6 signalosomes. Interacts with GRB10; the interaction prevents AXIN1 binding, thus negatively regulating the Wnt signaling pathway (By similarity). Interacts (via the extracellular domain) with RSPO1; the interaction activates Wnt/beta-catenin signaling. Interacts (via the extracellular domain) with RSPO3 (via the cysteine rich domain); the interaction activates Wnt/beta-catenin signaling. Interacts (via the beta-propeller regions 1 and 2) with SOST; the interaction competes with DKK1 for binding for inhibiting beta-catenin signaling. Interacts with MESD; the interaction prevents the formation of LRP6 aggregates and targets LRP6 to the plasma membrane (By similarity). Interacts (via the cytoplasmic domain) with CSNKIE; the interaction phosphorylates LRP6, binds AXIN1 and inhibits AXIN1/GSK3B-mediated phosphorylation of beta-catenin. Interacts with MACF1. Interacts with DAB2; the interaction involves LRP6 phosphorylation by CK2 and sequesters LRP6 towards clathrin-mediated endocytosis. Interacts with TMEM198. Interacts with CAPRIN2; the interaction promotes LRP6 phosphorylation at Ser-1490 (PubMed:18762581, PubMed:25331957). Found in a complex with CAPRIN2, CCNY and CDK14 during G2/M stage; CAPRIN2 functions as a scaffold for the complex by binding to CCNY via its N terminus and to CDK14 via its C terminus (PubMed:27821587). Interacts with LYPD6 (via NxI motif) (PubMed:23987510, PubMed:30069874). Forms a ternary complex with DKK1 and KREM1 (PubMed:27524201). Interacts with KREM1 in a DKK1-dependent manner (PubMed:17804805). Interacts with MDK: this interaction is calcium dependent (By similarity). Interacts with LMBR1L (PubMed:31073040). Interacts with GPR37; this interaction promotes LRP6 maturation (PubMed:28341812).</text>
</comment>
<comment type="interaction">
    <interactant intactId="EBI-910915">
        <id>O75581</id>
    </interactant>
    <interactant intactId="EBI-8583355">
        <id>Q9Y4X0</id>
        <label>AMMECR1</label>
    </interactant>
    <organismsDiffer>false</organismsDiffer>
    <experiments>5</experiments>
</comment>
<comment type="interaction">
    <interactant intactId="EBI-910915">
        <id>O75581</id>
    </interactant>
    <interactant intactId="EBI-905643">
        <id>Q9H6X2</id>
        <label>ANTXR1</label>
    </interactant>
    <organismsDiffer>false</organismsDiffer>
    <experiments>3</experiments>
</comment>
<comment type="interaction">
    <interactant intactId="EBI-910915">
        <id>O75581</id>
    </interactant>
    <interactant intactId="EBI-10987526">
        <id>O15169-2</id>
        <label>AXIN1</label>
    </interactant>
    <organismsDiffer>false</organismsDiffer>
    <experiments>3</experiments>
</comment>
<comment type="interaction">
    <interactant intactId="EBI-910915">
        <id>O75581</id>
    </interactant>
    <interactant intactId="EBI-603614">
        <id>Q03135</id>
        <label>CAV1</label>
    </interactant>
    <organismsDiffer>false</organismsDiffer>
    <experiments>3</experiments>
</comment>
<comment type="interaction">
    <interactant intactId="EBI-910915">
        <id>O75581</id>
    </interactant>
    <interactant intactId="EBI-17572009">
        <id>Q9UBR5</id>
        <label>CKLF</label>
    </interactant>
    <organismsDiffer>false</organismsDiffer>
    <experiments>3</experiments>
</comment>
<comment type="interaction">
    <interactant intactId="EBI-910915">
        <id>O75581</id>
    </interactant>
    <interactant intactId="EBI-1171238">
        <id>P98082</id>
        <label>DAB2</label>
    </interactant>
    <organismsDiffer>false</organismsDiffer>
    <experiments>20</experiments>
</comment>
<comment type="interaction">
    <interactant intactId="EBI-910915">
        <id>O75581</id>
    </interactant>
    <interactant intactId="EBI-742864">
        <id>O94907</id>
        <label>DKK1</label>
    </interactant>
    <organismsDiffer>false</organismsDiffer>
    <experiments>18</experiments>
</comment>
<comment type="interaction">
    <interactant intactId="EBI-910915">
        <id>O75581</id>
    </interactant>
    <interactant intactId="EBI-13274770">
        <id>Q9UBU2</id>
        <label>DKK2</label>
    </interactant>
    <organismsDiffer>false</organismsDiffer>
    <experiments>4</experiments>
</comment>
<comment type="interaction">
    <interactant intactId="EBI-910915">
        <id>O75581</id>
    </interactant>
    <interactant intactId="EBI-1044067">
        <id>P49840</id>
        <label>GSK3A</label>
    </interactant>
    <organismsDiffer>false</organismsDiffer>
    <experiments>3</experiments>
</comment>
<comment type="interaction">
    <interactant intactId="EBI-910915">
        <id>O75581</id>
    </interactant>
    <interactant intactId="EBI-373586">
        <id>P49841</id>
        <label>GSK3B</label>
    </interactant>
    <organismsDiffer>false</organismsDiffer>
    <experiments>4</experiments>
</comment>
<comment type="interaction">
    <interactant intactId="EBI-910915">
        <id>O75581</id>
    </interactant>
    <interactant intactId="EBI-910915">
        <id>O75581</id>
        <label>LRP6</label>
    </interactant>
    <organismsDiffer>false</organismsDiffer>
    <experiments>4</experiments>
</comment>
<comment type="interaction">
    <interactant intactId="EBI-910915">
        <id>O75581</id>
    </interactant>
    <interactant intactId="EBI-5323863">
        <id>Q5S007</id>
        <label>LRRK2</label>
    </interactant>
    <organismsDiffer>false</organismsDiffer>
    <experiments>4</experiments>
</comment>
<comment type="interaction">
    <interactant intactId="EBI-910915">
        <id>O75581</id>
    </interactant>
    <interactant intactId="EBI-641237">
        <id>P09619</id>
        <label>PDGFRB</label>
    </interactant>
    <organismsDiffer>false</organismsDiffer>
    <experiments>3</experiments>
</comment>
<comment type="interaction">
    <interactant intactId="EBI-910915">
        <id>O75581</id>
    </interactant>
    <interactant intactId="EBI-5746563">
        <id>Q9BQB4</id>
        <label>SOST</label>
    </interactant>
    <organismsDiffer>false</organismsDiffer>
    <experiments>9</experiments>
</comment>
<comment type="interaction">
    <interactant intactId="EBI-910915">
        <id>O75581</id>
    </interactant>
    <interactant intactId="EBI-7851084">
        <id>Q5XG87</id>
        <label>TENT4A</label>
    </interactant>
    <organismsDiffer>false</organismsDiffer>
    <experiments>2</experiments>
</comment>
<comment type="interaction">
    <interactant intactId="EBI-910915">
        <id>O75581</id>
    </interactant>
    <interactant intactId="EBI-6173037">
        <id>P56704</id>
        <label>WNT3A</label>
    </interactant>
    <organismsDiffer>false</organismsDiffer>
    <experiments>3</experiments>
</comment>
<comment type="interaction">
    <interactant intactId="EBI-910915">
        <id>O75581</id>
    </interactant>
    <interactant intactId="EBI-949772">
        <id>Q9ULT6</id>
        <label>ZNRF3</label>
    </interactant>
    <organismsDiffer>false</organismsDiffer>
    <experiments>2</experiments>
</comment>
<comment type="interaction">
    <interactant intactId="EBI-910915">
        <id>O75581</id>
    </interactant>
    <interactant intactId="EBI-2365912">
        <id>O35625</id>
        <label>Axin1</label>
    </interactant>
    <organismsDiffer>true</organismsDiffer>
    <experiments>2</experiments>
</comment>
<comment type="interaction">
    <interactant intactId="EBI-910915">
        <id>O75581</id>
    </interactant>
    <interactant intactId="EBI-6857773">
        <id>O70239</id>
        <label>Axin1</label>
    </interactant>
    <organismsDiffer>true</organismsDiffer>
    <experiments>12</experiments>
</comment>
<comment type="interaction">
    <interactant intactId="EBI-910915">
        <id>O75581</id>
    </interactant>
    <interactant intactId="EBI-6171689">
        <id>Q61091</id>
        <label>Fzd8</label>
    </interactant>
    <organismsDiffer>true</organismsDiffer>
    <experiments>4</experiments>
</comment>
<comment type="interaction">
    <interactant intactId="EBI-910915">
        <id>O75581</id>
    </interactant>
    <interactant intactId="EBI-15706768">
        <id>P47879</id>
        <label>Igfbp4</label>
    </interactant>
    <organismsDiffer>true</organismsDiffer>
    <experiments>4</experiments>
</comment>
<comment type="interaction">
    <interactant intactId="EBI-910915">
        <id>O75581</id>
    </interactant>
    <interactant intactId="EBI-6662606">
        <id>Q9ERE7</id>
        <label>Mesd</label>
    </interactant>
    <organismsDiffer>true</organismsDiffer>
    <experiments>2</experiments>
</comment>
<comment type="interaction">
    <interactant intactId="EBI-910915">
        <id>O75581</id>
    </interactant>
    <interactant intactId="EBI-1570911">
        <id>P04426</id>
        <label>Wnt1</label>
    </interactant>
    <organismsDiffer>true</organismsDiffer>
    <experiments>2</experiments>
</comment>
<comment type="interaction">
    <interactant intactId="EBI-910915">
        <id>O75581</id>
    </interactant>
    <interactant intactId="EBI-2899665">
        <id>P27467</id>
        <label>Wnt3a</label>
    </interactant>
    <organismsDiffer>true</organismsDiffer>
    <experiments>4</experiments>
</comment>
<comment type="subcellular location">
    <subcellularLocation>
        <location evidence="31 35">Cell membrane</location>
        <topology>Single-pass type I membrane protein</topology>
    </subcellularLocation>
    <subcellularLocation>
        <location evidence="35">Endoplasmic reticulum</location>
    </subcellularLocation>
    <subcellularLocation>
        <location evidence="33">Membrane raft</location>
    </subcellularLocation>
    <text evidence="1 31">On Wnt signaling, undergoes a cycle of caveolin- or clathrin-mediated endocytosis and plasma membrane location. Released from the endoplasmic reticulum on palmitoylation. Mono-ubiquitination retains it in the endoplasmic reticulum in the absence of palmitoylation. On Wnt signaling, phosphorylated, aggregates and colocalizes with AXIN1 and GSK3B at the plasma membrane in LRP6-signalosomes (By similarity). Chaperoned to the plasma membrane by HSP90B1 and MESD (PubMed:23572575).</text>
</comment>
<comment type="tissue specificity">
    <text>Widely coexpressed with LRP5 during embryogenesis and in adult tissues.</text>
</comment>
<comment type="induction">
    <text evidence="17">Decreased levels on WNT3A stimulation.</text>
</comment>
<comment type="domain">
    <text evidence="25">The YWTD-EGF-like domains 1 and 2 are required for the interaction with Wnt-frizzled complex. The YWTD-EGF-like domains 3 and 4 are required for the interaction with DKK1.</text>
</comment>
<comment type="domain">
    <text evidence="25">The PPPSP motifs play a central role in signal transduction by being phosphorylated, leading to activate the Wnt signaling pathway.</text>
</comment>
<comment type="PTM">
    <text evidence="10 11 15 16 17 19 22 23 24 25">Dual phosphorylation of cytoplasmic PPPSP motifs sequentially by GSK3 and CK1 is required for AXIN1-binding, and subsequent stabilization and activation of beta-catenin via preventing GSK3-mediated phosphorylation of beta-catenin. Phosphorylated, in vitro, by GRK5/6 within and outside the PPPSP motifs. Phosphorylation at Ser-1490 by CDK14 during G2/M phase leads to regulation of the Wnt signaling pathway during the cell cycle. Phosphorylation by GSK3B is induced by RPSO1 binding and inhibited by DKK1. Phosphorylated, in vitro, by casein kinase I on Thr-1479.</text>
</comment>
<comment type="PTM">
    <text>Undergoes gamma-secretase-dependent regulated intramembrane proteolysis (RIP). The extracellular domain is first released by shedding, and then, through the action of gamma-secretase, the intracellular domain (ICD) is released into the cytoplasm where it is free to bind to GSK3B and to activate canonical Wnt signaling.</text>
</comment>
<comment type="PTM">
    <text evidence="20">Palmitoylation on the two sites near the transmembrane domain leads to release of LRP6 from the endoplasmic reticulum.</text>
</comment>
<comment type="PTM">
    <text evidence="20 30">Mono-ubiquitinated which retains LRP6 in the endoplasmic reticulum. Ubiquitinated by ZNRF3, leading to its degradation by the proteasome.</text>
</comment>
<comment type="PTM">
    <text evidence="17 28">N-glycosylation is required for cell surface location.</text>
</comment>
<comment type="disease" evidence="14 32">
    <disease id="DI-01203">
        <name>Coronary artery disease, autosomal dominant, 2</name>
        <acronym>ADCAD2</acronym>
        <description>A common heart disease characterized by reduced or absent blood flow in one or more of the arteries that encircle and supply the heart. Its most important complication is acute myocardial infarction.</description>
        <dbReference type="MIM" id="610947"/>
    </disease>
    <text>The disease is caused by variants affecting the gene represented in this entry.</text>
</comment>
<comment type="disease" evidence="35">
    <disease id="DI-04606">
        <name>Tooth agenesis, selective, 7</name>
        <acronym>STHAG7</acronym>
        <description>An autosomal dominant form of selective tooth agenesis, a common anomaly characterized by the congenital absence of one or more teeth. Selective tooth agenesis without associated systemic disorders has sometimes been divided into 2 types: oligodontia, defined as agenesis of 6 or more permanent teeth, and hypodontia, defined as agenesis of less than 6 teeth. The number in both cases does not include absence of third molars (wisdom teeth).</description>
        <dbReference type="MIM" id="616724"/>
    </disease>
    <text>The disease is caused by variants affecting the gene represented in this entry.</text>
</comment>
<comment type="similarity">
    <text evidence="42">Belongs to the LDLR family.</text>
</comment>
<feature type="signal peptide" evidence="2">
    <location>
        <begin position="1"/>
        <end position="19"/>
    </location>
</feature>
<feature type="chain" id="PRO_0000017330" description="Low-density lipoprotein receptor-related protein 6">
    <location>
        <begin position="20"/>
        <end position="1613"/>
    </location>
</feature>
<feature type="topological domain" description="Extracellular" evidence="2">
    <location>
        <begin position="20"/>
        <end position="1370"/>
    </location>
</feature>
<feature type="transmembrane region" description="Helical" evidence="2">
    <location>
        <begin position="1371"/>
        <end position="1393"/>
    </location>
</feature>
<feature type="topological domain" description="Cytoplasmic" evidence="2">
    <location>
        <begin position="1394"/>
        <end position="1613"/>
    </location>
</feature>
<feature type="repeat" description="LDL-receptor class B 1">
    <location>
        <begin position="63"/>
        <end position="106"/>
    </location>
</feature>
<feature type="repeat" description="LDL-receptor class B 2">
    <location>
        <begin position="107"/>
        <end position="149"/>
    </location>
</feature>
<feature type="repeat" description="LDL-receptor class B 3">
    <location>
        <begin position="150"/>
        <end position="193"/>
    </location>
</feature>
<feature type="repeat" description="LDL-receptor class B 4">
    <location>
        <begin position="194"/>
        <end position="236"/>
    </location>
</feature>
<feature type="repeat" description="LDL-receptor class B 5">
    <location>
        <begin position="237"/>
        <end position="276"/>
    </location>
</feature>
<feature type="domain" description="EGF-like 1">
    <location>
        <begin position="282"/>
        <end position="324"/>
    </location>
</feature>
<feature type="repeat" description="LDL-receptor class B 6">
    <location>
        <begin position="372"/>
        <end position="414"/>
    </location>
</feature>
<feature type="repeat" description="LDL-receptor class B 7">
    <location>
        <begin position="415"/>
        <end position="457"/>
    </location>
</feature>
<feature type="repeat" description="LDL-receptor class B 8">
    <location>
        <begin position="458"/>
        <end position="501"/>
    </location>
</feature>
<feature type="repeat" description="LDL-receptor class B 9">
    <location>
        <begin position="502"/>
        <end position="542"/>
    </location>
</feature>
<feature type="repeat" description="LDL-receptor class B 10">
    <location>
        <begin position="543"/>
        <end position="584"/>
    </location>
</feature>
<feature type="domain" description="EGF-like 2">
    <location>
        <begin position="588"/>
        <end position="628"/>
    </location>
</feature>
<feature type="repeat" description="LDL-receptor class B 11">
    <location>
        <begin position="674"/>
        <end position="716"/>
    </location>
</feature>
<feature type="repeat" description="LDL-receptor class B 12">
    <location>
        <begin position="717"/>
        <end position="759"/>
    </location>
</feature>
<feature type="repeat" description="LDL-receptor class B 13">
    <location>
        <begin position="760"/>
        <end position="802"/>
    </location>
</feature>
<feature type="repeat" description="LDL-receptor class B 14">
    <location>
        <begin position="803"/>
        <end position="842"/>
    </location>
</feature>
<feature type="repeat" description="LDL-receptor class B 15">
    <location>
        <begin position="843"/>
        <end position="885"/>
    </location>
</feature>
<feature type="domain" description="EGF-like 3">
    <location>
        <begin position="889"/>
        <end position="930"/>
    </location>
</feature>
<feature type="repeat" description="LDL-receptor class B 16">
    <location>
        <begin position="977"/>
        <end position="1025"/>
    </location>
</feature>
<feature type="repeat" description="LDL-receptor class B 17">
    <location>
        <begin position="1026"/>
        <end position="1068"/>
    </location>
</feature>
<feature type="repeat" description="LDL-receptor class B 18">
    <location>
        <begin position="1069"/>
        <end position="1113"/>
    </location>
</feature>
<feature type="repeat" description="LDL-receptor class B 19">
    <location>
        <begin position="1114"/>
        <end position="1156"/>
    </location>
</feature>
<feature type="repeat" description="LDL-receptor class B 20">
    <location>
        <begin position="1157"/>
        <end position="1198"/>
    </location>
</feature>
<feature type="domain" description="EGF-like 4">
    <location>
        <begin position="1203"/>
        <end position="1244"/>
    </location>
</feature>
<feature type="domain" description="LDL-receptor class A 1" evidence="3">
    <location>
        <begin position="1248"/>
        <end position="1286"/>
    </location>
</feature>
<feature type="domain" description="LDL-receptor class A 2" evidence="3">
    <location>
        <begin position="1287"/>
        <end position="1323"/>
    </location>
</feature>
<feature type="domain" description="LDL-receptor class A 3" evidence="3">
    <location>
        <begin position="1325"/>
        <end position="1361"/>
    </location>
</feature>
<feature type="region of interest" description="Beta-propeller 1">
    <location>
        <begin position="20"/>
        <end position="275"/>
    </location>
</feature>
<feature type="region of interest" description="Beta-propeller 2">
    <location>
        <begin position="328"/>
        <end position="589"/>
    </location>
</feature>
<feature type="region of interest" description="Beta-propeller 3">
    <location>
        <begin position="631"/>
        <end position="890"/>
    </location>
</feature>
<feature type="region of interest" description="Beta-propeller 4">
    <location>
        <begin position="933"/>
        <end position="1202"/>
    </location>
</feature>
<feature type="region of interest" description="Disordered" evidence="4">
    <location>
        <begin position="1556"/>
        <end position="1613"/>
    </location>
</feature>
<feature type="short sequence motif" description="PPPSP motif A">
    <location>
        <begin position="1487"/>
        <end position="1493"/>
    </location>
</feature>
<feature type="short sequence motif" description="PPPSP motif B">
    <location>
        <begin position="1527"/>
        <end position="1534"/>
    </location>
</feature>
<feature type="short sequence motif" description="PPPSP motif C">
    <location>
        <begin position="1568"/>
        <end position="1575"/>
    </location>
</feature>
<feature type="short sequence motif" description="PPPSP motif D">
    <location>
        <begin position="1588"/>
        <end position="1593"/>
    </location>
</feature>
<feature type="short sequence motif" description="PPPSP motif E">
    <location>
        <begin position="1603"/>
        <end position="1610"/>
    </location>
</feature>
<feature type="compositionally biased region" description="Pro residues" evidence="4">
    <location>
        <begin position="1602"/>
        <end position="1613"/>
    </location>
</feature>
<feature type="modified residue" description="Phosphoserine; by CK1" evidence="11">
    <location>
        <position position="1420"/>
    </location>
</feature>
<feature type="modified residue" description="Phosphoserine; by CK1" evidence="11">
    <location>
        <position position="1430"/>
    </location>
</feature>
<feature type="modified residue" description="Phosphothreonine" evidence="16">
    <location>
        <position position="1479"/>
    </location>
</feature>
<feature type="modified residue" description="Phosphoserine; by CDK14, GRK5 and GRK6" evidence="10 17 21 24 25 34 37 44">
    <location>
        <position position="1490"/>
    </location>
</feature>
<feature type="modified residue" description="Phosphothreonine; by CK1" evidence="10">
    <location>
        <position position="1493"/>
    </location>
</feature>
<feature type="lipid moiety-binding region" description="S-palmitoyl cysteine" evidence="20">
    <location>
        <position position="1394"/>
    </location>
</feature>
<feature type="lipid moiety-binding region" description="S-palmitoyl cysteine" evidence="20">
    <location>
        <position position="1399"/>
    </location>
</feature>
<feature type="glycosylation site" description="N-linked (GlcNAc...) asparagine" evidence="2">
    <location>
        <position position="42"/>
    </location>
</feature>
<feature type="glycosylation site" description="N-linked (GlcNAc...) asparagine" evidence="2">
    <location>
        <position position="81"/>
    </location>
</feature>
<feature type="glycosylation site" description="N-linked (GlcNAc...) asparagine" evidence="2">
    <location>
        <position position="281"/>
    </location>
</feature>
<feature type="glycosylation site" description="N-linked (GlcNAc...) asparagine" evidence="2">
    <location>
        <position position="433"/>
    </location>
</feature>
<feature type="glycosylation site" description="N-linked (GlcNAc...) asparagine" evidence="2">
    <location>
        <position position="486"/>
    </location>
</feature>
<feature type="glycosylation site" description="N-linked (GlcNAc...) asparagine" evidence="28">
    <location>
        <position position="692"/>
    </location>
</feature>
<feature type="glycosylation site" description="N-linked (GlcNAc...) asparagine" evidence="28">
    <location>
        <position position="859"/>
    </location>
</feature>
<feature type="glycosylation site" description="N-linked (GlcNAc...) asparagine" evidence="28">
    <location>
        <position position="865"/>
    </location>
</feature>
<feature type="glycosylation site" description="N-linked (GlcNAc...) asparagine" evidence="28">
    <location>
        <position position="926"/>
    </location>
</feature>
<feature type="glycosylation site" description="N-linked (GlcNAc...) asparagine" evidence="28">
    <location>
        <position position="1039"/>
    </location>
</feature>
<feature type="disulfide bond" evidence="3">
    <location>
        <begin position="286"/>
        <end position="297"/>
    </location>
</feature>
<feature type="disulfide bond" evidence="3">
    <location>
        <begin position="293"/>
        <end position="308"/>
    </location>
</feature>
<feature type="disulfide bond" evidence="3">
    <location>
        <begin position="310"/>
        <end position="323"/>
    </location>
</feature>
<feature type="disulfide bond" evidence="3">
    <location>
        <begin position="592"/>
        <end position="603"/>
    </location>
</feature>
<feature type="disulfide bond" evidence="3">
    <location>
        <begin position="599"/>
        <end position="612"/>
    </location>
</feature>
<feature type="disulfide bond" evidence="3">
    <location>
        <begin position="614"/>
        <end position="627"/>
    </location>
</feature>
<feature type="disulfide bond" evidence="3 28">
    <location>
        <begin position="893"/>
        <end position="904"/>
    </location>
</feature>
<feature type="disulfide bond" evidence="3 28">
    <location>
        <begin position="900"/>
        <end position="914"/>
    </location>
</feature>
<feature type="disulfide bond" evidence="3 28">
    <location>
        <begin position="916"/>
        <end position="929"/>
    </location>
</feature>
<feature type="disulfide bond" evidence="3 28">
    <location>
        <begin position="1207"/>
        <end position="1218"/>
    </location>
</feature>
<feature type="disulfide bond" evidence="3 28">
    <location>
        <begin position="1214"/>
        <end position="1228"/>
    </location>
</feature>
<feature type="disulfide bond" evidence="3 28">
    <location>
        <begin position="1230"/>
        <end position="1243"/>
    </location>
</feature>
<feature type="disulfide bond" evidence="3">
    <location>
        <begin position="1249"/>
        <end position="1263"/>
    </location>
</feature>
<feature type="disulfide bond" evidence="3">
    <location>
        <begin position="1256"/>
        <end position="1276"/>
    </location>
</feature>
<feature type="disulfide bond" evidence="3">
    <location>
        <begin position="1270"/>
        <end position="1285"/>
    </location>
</feature>
<feature type="disulfide bond" evidence="3">
    <location>
        <begin position="1288"/>
        <end position="1300"/>
    </location>
</feature>
<feature type="disulfide bond" evidence="3">
    <location>
        <begin position="1295"/>
        <end position="1313"/>
    </location>
</feature>
<feature type="disulfide bond" evidence="3">
    <location>
        <begin position="1307"/>
        <end position="1322"/>
    </location>
</feature>
<feature type="disulfide bond" evidence="3">
    <location>
        <begin position="1326"/>
        <end position="1338"/>
    </location>
</feature>
<feature type="disulfide bond" evidence="3">
    <location>
        <begin position="1333"/>
        <end position="1351"/>
    </location>
</feature>
<feature type="disulfide bond" evidence="3">
    <location>
        <begin position="1345"/>
        <end position="1360"/>
    </location>
</feature>
<feature type="cross-link" description="Glycyl lysine isopeptide (Lys-Gly) (interchain with G-Cter in ubiquitin)" evidence="20">
    <location>
        <position position="1403"/>
    </location>
</feature>
<feature type="sequence variant" id="VAR_076207" description="In STHAG7; impairs Wnt signaling; prevents transport to plasma membrane location; dbSNP:rs864309648." evidence="35">
    <original>A</original>
    <variation>V</variation>
    <location>
        <position position="19"/>
    </location>
</feature>
<feature type="sequence variant" id="VAR_076208" description="In ADCAD2; dbSNP:rs141212743." evidence="32">
    <original>R</original>
    <variation>H</variation>
    <location>
        <position position="360"/>
    </location>
</feature>
<feature type="sequence variant" id="VAR_076209" description="In ADCAD2; dbSNP:rs397515473." evidence="32">
    <original>N</original>
    <variation>S</variation>
    <location>
        <position position="433"/>
    </location>
</feature>
<feature type="sequence variant" id="VAR_076210" description="In ADCAD2; impairs Wnt signaling; dbSNP:rs397515474." evidence="32">
    <original>R</original>
    <variation>Q</variation>
    <location>
        <position position="473"/>
    </location>
</feature>
<feature type="sequence variant" id="VAR_030349" description="In dbSNP:rs7975614.">
    <original>V</original>
    <variation>I</variation>
    <location>
        <position position="483"/>
    </location>
</feature>
<feature type="sequence variant" id="VAR_034701" description="In ADCAD2; impairs Wnt signaling in vitro; dbSNP:rs121918313." evidence="14">
    <original>R</original>
    <variation>C</variation>
    <location>
        <position position="611"/>
    </location>
</feature>
<feature type="sequence variant" id="VAR_030350" description="In dbSNP:rs2302686.">
    <original>S</original>
    <variation>C</variation>
    <location>
        <position position="817"/>
    </location>
</feature>
<feature type="sequence variant" id="VAR_024520" description="In dbSNP:rs2302685." evidence="41">
    <original>V</original>
    <variation>I</variation>
    <location>
        <position position="1062"/>
    </location>
</feature>
<feature type="sequence variant" id="VAR_034702" description="In dbSNP:rs34815107.">
    <original>R</original>
    <variation>H</variation>
    <location>
        <position position="1401"/>
    </location>
</feature>
<feature type="sequence variant" id="VAR_083431" description="Found in a patient with congenital hydrocephalus; uncertain significance." evidence="39">
    <original>V</original>
    <variation>F</variation>
    <location>
        <position position="1415"/>
    </location>
</feature>
<feature type="mutagenesis site" description="Some reduction of palmitoylation, little change in plasma membrane location in the presence of MESD nor in Wnt-signaling activity. Completely abolishes palmitoylation, no plasma membrane location, greatly reduced Wnt-signaling activity but no effect on ubiquitination; when associated with A-1399. Exhibits full Wnt-signaling activity and no change in plasma membrane location; when associated with A-1399 and R-1403." evidence="20">
    <original>C</original>
    <variation>A</variation>
    <location>
        <position position="1394"/>
    </location>
</feature>
<feature type="mutagenesis site" description="Some reduction of palmitoylation, and little change in plasma membrane location in the presence of MESD nor in Wnt-signaling activity. Completely abolishes palmitoylation, no plasma membrane location, greatly reduced Wnt-signaling activity but no effect on ubiquitination; when associated with A-1394. Exhibits full Wnt-signaling activity and no change in plasma membrane location in the in presence of MESD; when associated with A-1394 and R-1403." evidence="20">
    <original>C</original>
    <variation>A</variation>
    <location>
        <position position="1399"/>
    </location>
</feature>
<feature type="mutagenesis site" description="Abolishes ubiquitination, no change in plasma membrane location in the presence of MESD but greatly reduced Wnt-signaling activity. Exhibits full Wnt-signaling activity and no change in plasma membrane location; when associated with A-1394 and A-1399.">
    <original>K</original>
    <variation>R</variation>
    <location>
        <position position="1403"/>
    </location>
</feature>
<feature type="mutagenesis site" description="Enhanced AXIN1 binding and increased beta-catenin activity by 2.2-fold. Further enhanced AXIN1 binding and increases beta-catenin activity by 3.3-fold; when associated with A-1430." evidence="11">
    <original>S</original>
    <variation>A</variation>
    <location>
        <position position="1420"/>
    </location>
</feature>
<feature type="mutagenesis site" description="Enhanced AXIN1 binding. Further enhanced AXIN1 binding and increases beta-catenin activity by 3.3-fold; when associated with A-1420." evidence="11">
    <original>S</original>
    <variation>A</variation>
    <location>
        <position position="1430"/>
    </location>
</feature>
<feature type="mutagenesis site" description="No change in the phosphorylation state of PPPSP motif. Some reduction in Wnt/beta-catenin signaling." evidence="19">
    <original>L</original>
    <variation>A</variation>
    <location>
        <position position="1485"/>
    </location>
</feature>
<feature type="mutagenesis site" description="No change in the phosphorylation state of PPPSP motif. Increased Wnt/beta-catenin signaling." evidence="19">
    <original>N</original>
    <variation>A</variation>
    <location>
        <position position="1486"/>
    </location>
</feature>
<feature type="mutagenesis site" description="No change in the phosphorylation state of PPPSP motif A. Greatly reduced Wnt/beta-catenin signaling." evidence="19">
    <original>P</original>
    <variation>A</variation>
    <location>
        <position position="1487"/>
    </location>
</feature>
<feature type="mutagenesis site" description="No change in the phosphorylation state of PPPSP motif A. Greatly reduced Wnt/beta-catenin signaling." evidence="19">
    <original>P</original>
    <variation>C</variation>
    <location>
        <position position="1487"/>
    </location>
</feature>
<feature type="mutagenesis site" description="No change in the phosphorylation state of PPPSP motif A. Greatly reduced Wnt/beta-catenin signaling." evidence="19">
    <original>P</original>
    <variation>A</variation>
    <location>
        <position position="1488"/>
    </location>
</feature>
<feature type="mutagenesis site" description="No change in the phosphorylation state of PPPSP motif A. Greatly reduced Wnt/beta-catenin signaling." evidence="19">
    <original>P</original>
    <variation>A</variation>
    <location>
        <position position="1489"/>
    </location>
</feature>
<feature type="mutagenesis site" description="Greatly reduced phosphorylation of PPPSP motif A. Greatly reduced Wnt/beta-catenin signaling." evidence="19">
    <original>S</original>
    <variation>A</variation>
    <location>
        <position position="1490"/>
    </location>
</feature>
<feature type="mutagenesis site" description="Some loss of phosphorylation of PPPSP motif A. Little reduction in Wnt/beta-catenin signaling." evidence="19">
    <original>S</original>
    <variation>T</variation>
    <location>
        <position position="1490"/>
    </location>
</feature>
<feature type="mutagenesis site" description="Greatly reduced phosphorylation of PPPSP motif A. Greatly reduced Wnt/beta-catenin signaling." evidence="19">
    <original>P</original>
    <variation>A</variation>
    <location>
        <position position="1491"/>
    </location>
</feature>
<feature type="mutagenesis site" description="No change in the phosphorylation state of PPPSP motif A. Greatly reduced Wnt/beta-catenin signaling." evidence="19">
    <original>A</original>
    <variation>G</variation>
    <location>
        <position position="1492"/>
    </location>
</feature>
<feature type="mutagenesis site" description="No change in the phosphorylation state of PPPSP motif A. Greatly reduced Wnt/beta-catenin signaling." evidence="19">
    <original>T</original>
    <variation>A</variation>
    <location>
        <position position="1493"/>
    </location>
</feature>
<feature type="mutagenesis site" description="No change in the phosphorylation state of PPPSP motif A. Little reduction of Wnt/beta-catenin signaling." evidence="19">
    <original>E</original>
    <variation>A</variation>
    <location>
        <position position="1494"/>
    </location>
</feature>
<feature type="mutagenesis site" description="No change in the phosphorylation state of PPPSP motif. No reduction of Wnt/beta-catenin signaling." evidence="19">
    <original>R</original>
    <variation>A</variation>
    <location>
        <position position="1495"/>
    </location>
</feature>
<feature type="mutagenesis site" description="No effect on the phosphorylation state of PPPSP motif B." evidence="19">
    <original>T</original>
    <variation>A</variation>
    <location>
        <position position="1529"/>
    </location>
</feature>
<feature type="mutagenesis site" description="Abolishes phosphorylation of PPPSP motif B. Reduced Wnt/beta-catenin signaling." evidence="19">
    <original>T</original>
    <variation>A</variation>
    <location>
        <position position="1530"/>
    </location>
</feature>
<feature type="mutagenesis site" description="Abolishes phosphorylation of PPPSP motif B. Reduced Wnt/beta-catenin signaling." evidence="19">
    <original>P</original>
    <variation>A</variation>
    <location>
        <position position="1531"/>
    </location>
</feature>
<feature type="mutagenesis site" description="Abolishes Wnt/beta-catenin signaling." evidence="19">
    <original>T</original>
    <variation>A</variation>
    <location>
        <position position="1572"/>
    </location>
</feature>
<feature type="mutagenesis site" description="Abolishes Wnt/beta-catenin signaling." evidence="19">
    <original>S</original>
    <variation>A</variation>
    <location>
        <position position="1590"/>
    </location>
</feature>
<feature type="mutagenesis site" description="Abolishes Wnt/beta-catenin signaling." evidence="19">
    <original>S</original>
    <variation>A</variation>
    <location>
        <position position="1607"/>
    </location>
</feature>
<feature type="strand" evidence="45">
    <location>
        <begin position="22"/>
        <end position="26"/>
    </location>
</feature>
<feature type="strand" evidence="45">
    <location>
        <begin position="28"/>
        <end position="35"/>
    </location>
</feature>
<feature type="turn" evidence="50">
    <location>
        <begin position="37"/>
        <end position="40"/>
    </location>
</feature>
<feature type="strand" evidence="45">
    <location>
        <begin position="44"/>
        <end position="59"/>
    </location>
</feature>
<feature type="helix" evidence="45">
    <location>
        <begin position="60"/>
        <end position="62"/>
    </location>
</feature>
<feature type="strand" evidence="45">
    <location>
        <begin position="64"/>
        <end position="69"/>
    </location>
</feature>
<feature type="turn" evidence="45">
    <location>
        <begin position="70"/>
        <end position="73"/>
    </location>
</feature>
<feature type="strand" evidence="45">
    <location>
        <begin position="74"/>
        <end position="79"/>
    </location>
</feature>
<feature type="strand" evidence="45">
    <location>
        <begin position="82"/>
        <end position="84"/>
    </location>
</feature>
<feature type="strand" evidence="45">
    <location>
        <begin position="88"/>
        <end position="92"/>
    </location>
</feature>
<feature type="strand" evidence="45">
    <location>
        <begin position="99"/>
        <end position="103"/>
    </location>
</feature>
<feature type="turn" evidence="45">
    <location>
        <begin position="104"/>
        <end position="107"/>
    </location>
</feature>
<feature type="strand" evidence="45">
    <location>
        <begin position="108"/>
        <end position="113"/>
    </location>
</feature>
<feature type="turn" evidence="45">
    <location>
        <begin position="114"/>
        <end position="117"/>
    </location>
</feature>
<feature type="strand" evidence="45">
    <location>
        <begin position="118"/>
        <end position="123"/>
    </location>
</feature>
<feature type="strand" evidence="45">
    <location>
        <begin position="130"/>
        <end position="133"/>
    </location>
</feature>
<feature type="strand" evidence="45">
    <location>
        <begin position="138"/>
        <end position="146"/>
    </location>
</feature>
<feature type="helix" evidence="45">
    <location>
        <begin position="147"/>
        <end position="149"/>
    </location>
</feature>
<feature type="strand" evidence="45">
    <location>
        <begin position="151"/>
        <end position="156"/>
    </location>
</feature>
<feature type="strand" evidence="45">
    <location>
        <begin position="158"/>
        <end position="160"/>
    </location>
</feature>
<feature type="strand" evidence="45">
    <location>
        <begin position="162"/>
        <end position="167"/>
    </location>
</feature>
<feature type="strand" evidence="45">
    <location>
        <begin position="174"/>
        <end position="177"/>
    </location>
</feature>
<feature type="strand" evidence="45">
    <location>
        <begin position="184"/>
        <end position="190"/>
    </location>
</feature>
<feature type="turn" evidence="45">
    <location>
        <begin position="191"/>
        <end position="194"/>
    </location>
</feature>
<feature type="strand" evidence="45">
    <location>
        <begin position="195"/>
        <end position="200"/>
    </location>
</feature>
<feature type="turn" evidence="45">
    <location>
        <begin position="201"/>
        <end position="204"/>
    </location>
</feature>
<feature type="strand" evidence="45">
    <location>
        <begin position="205"/>
        <end position="210"/>
    </location>
</feature>
<feature type="strand" evidence="45">
    <location>
        <begin position="217"/>
        <end position="220"/>
    </location>
</feature>
<feature type="strand" evidence="45">
    <location>
        <begin position="227"/>
        <end position="233"/>
    </location>
</feature>
<feature type="strand" evidence="45">
    <location>
        <begin position="236"/>
        <end position="241"/>
    </location>
</feature>
<feature type="turn" evidence="45">
    <location>
        <begin position="242"/>
        <end position="245"/>
    </location>
</feature>
<feature type="strand" evidence="45">
    <location>
        <begin position="246"/>
        <end position="251"/>
    </location>
</feature>
<feature type="turn" evidence="45">
    <location>
        <begin position="252"/>
        <end position="254"/>
    </location>
</feature>
<feature type="strand" evidence="45">
    <location>
        <begin position="259"/>
        <end position="262"/>
    </location>
</feature>
<feature type="strand" evidence="45">
    <location>
        <begin position="271"/>
        <end position="274"/>
    </location>
</feature>
<feature type="helix" evidence="45">
    <location>
        <begin position="276"/>
        <end position="278"/>
    </location>
</feature>
<feature type="turn" evidence="45">
    <location>
        <begin position="285"/>
        <end position="289"/>
    </location>
</feature>
<feature type="helix" evidence="45">
    <location>
        <begin position="290"/>
        <end position="292"/>
    </location>
</feature>
<feature type="strand" evidence="45">
    <location>
        <begin position="294"/>
        <end position="299"/>
    </location>
</feature>
<feature type="strand" evidence="45">
    <location>
        <begin position="305"/>
        <end position="309"/>
    </location>
</feature>
<feature type="strand" evidence="50">
    <location>
        <begin position="328"/>
        <end position="337"/>
    </location>
</feature>
<feature type="strand" evidence="50">
    <location>
        <begin position="339"/>
        <end position="346"/>
    </location>
</feature>
<feature type="strand" evidence="50">
    <location>
        <begin position="351"/>
        <end position="353"/>
    </location>
</feature>
<feature type="strand" evidence="50">
    <location>
        <begin position="362"/>
        <end position="368"/>
    </location>
</feature>
<feature type="turn" evidence="50">
    <location>
        <begin position="369"/>
        <end position="372"/>
    </location>
</feature>
<feature type="strand" evidence="50">
    <location>
        <begin position="373"/>
        <end position="378"/>
    </location>
</feature>
<feature type="turn" evidence="50">
    <location>
        <begin position="379"/>
        <end position="382"/>
    </location>
</feature>
<feature type="strand" evidence="50">
    <location>
        <begin position="383"/>
        <end position="387"/>
    </location>
</feature>
<feature type="strand" evidence="47">
    <location>
        <begin position="389"/>
        <end position="391"/>
    </location>
</feature>
<feature type="strand" evidence="50">
    <location>
        <begin position="395"/>
        <end position="398"/>
    </location>
</feature>
<feature type="strand" evidence="50">
    <location>
        <begin position="407"/>
        <end position="411"/>
    </location>
</feature>
<feature type="turn" evidence="50">
    <location>
        <begin position="412"/>
        <end position="415"/>
    </location>
</feature>
<feature type="strand" evidence="50">
    <location>
        <begin position="416"/>
        <end position="421"/>
    </location>
</feature>
<feature type="turn" evidence="50">
    <location>
        <begin position="422"/>
        <end position="425"/>
    </location>
</feature>
<feature type="strand" evidence="50">
    <location>
        <begin position="426"/>
        <end position="431"/>
    </location>
</feature>
<feature type="strand" evidence="50">
    <location>
        <begin position="438"/>
        <end position="441"/>
    </location>
</feature>
<feature type="strand" evidence="50">
    <location>
        <begin position="446"/>
        <end position="454"/>
    </location>
</feature>
<feature type="turn" evidence="50">
    <location>
        <begin position="455"/>
        <end position="458"/>
    </location>
</feature>
<feature type="strand" evidence="50">
    <location>
        <begin position="459"/>
        <end position="464"/>
    </location>
</feature>
<feature type="strand" evidence="50">
    <location>
        <begin position="466"/>
        <end position="468"/>
    </location>
</feature>
<feature type="strand" evidence="50">
    <location>
        <begin position="470"/>
        <end position="475"/>
    </location>
</feature>
<feature type="strand" evidence="50">
    <location>
        <begin position="482"/>
        <end position="485"/>
    </location>
</feature>
<feature type="strand" evidence="50">
    <location>
        <begin position="492"/>
        <end position="498"/>
    </location>
</feature>
<feature type="turn" evidence="50">
    <location>
        <begin position="499"/>
        <end position="502"/>
    </location>
</feature>
<feature type="strand" evidence="50">
    <location>
        <begin position="503"/>
        <end position="508"/>
    </location>
</feature>
<feature type="turn" evidence="50">
    <location>
        <begin position="509"/>
        <end position="512"/>
    </location>
</feature>
<feature type="strand" evidence="50">
    <location>
        <begin position="513"/>
        <end position="518"/>
    </location>
</feature>
<feature type="strand" evidence="50">
    <location>
        <begin position="525"/>
        <end position="528"/>
    </location>
</feature>
<feature type="strand" evidence="50">
    <location>
        <begin position="535"/>
        <end position="541"/>
    </location>
</feature>
<feature type="strand" evidence="50">
    <location>
        <begin position="544"/>
        <end position="549"/>
    </location>
</feature>
<feature type="turn" evidence="50">
    <location>
        <begin position="550"/>
        <end position="553"/>
    </location>
</feature>
<feature type="strand" evidence="50">
    <location>
        <begin position="554"/>
        <end position="559"/>
    </location>
</feature>
<feature type="turn" evidence="50">
    <location>
        <begin position="560"/>
        <end position="562"/>
    </location>
</feature>
<feature type="strand" evidence="50">
    <location>
        <begin position="565"/>
        <end position="569"/>
    </location>
</feature>
<feature type="strand" evidence="50">
    <location>
        <begin position="575"/>
        <end position="584"/>
    </location>
</feature>
<feature type="helix" evidence="50">
    <location>
        <begin position="591"/>
        <end position="593"/>
    </location>
</feature>
<feature type="helix" evidence="50">
    <location>
        <begin position="595"/>
        <end position="598"/>
    </location>
</feature>
<feature type="strand" evidence="50">
    <location>
        <begin position="600"/>
        <end position="604"/>
    </location>
</feature>
<feature type="strand" evidence="50">
    <location>
        <begin position="611"/>
        <end position="613"/>
    </location>
</feature>
<feature type="strand" evidence="46">
    <location>
        <begin position="633"/>
        <end position="638"/>
    </location>
</feature>
<feature type="strand" evidence="46">
    <location>
        <begin position="641"/>
        <end position="648"/>
    </location>
</feature>
<feature type="strand" evidence="46">
    <location>
        <begin position="653"/>
        <end position="655"/>
    </location>
</feature>
<feature type="strand" evidence="46">
    <location>
        <begin position="664"/>
        <end position="670"/>
    </location>
</feature>
<feature type="turn" evidence="46">
    <location>
        <begin position="671"/>
        <end position="674"/>
    </location>
</feature>
<feature type="strand" evidence="46">
    <location>
        <begin position="675"/>
        <end position="680"/>
    </location>
</feature>
<feature type="turn" evidence="46">
    <location>
        <begin position="681"/>
        <end position="684"/>
    </location>
</feature>
<feature type="strand" evidence="46">
    <location>
        <begin position="685"/>
        <end position="690"/>
    </location>
</feature>
<feature type="strand" evidence="46">
    <location>
        <begin position="697"/>
        <end position="700"/>
    </location>
</feature>
<feature type="strand" evidence="46">
    <location>
        <begin position="709"/>
        <end position="713"/>
    </location>
</feature>
<feature type="turn" evidence="46">
    <location>
        <begin position="714"/>
        <end position="717"/>
    </location>
</feature>
<feature type="strand" evidence="46">
    <location>
        <begin position="718"/>
        <end position="723"/>
    </location>
</feature>
<feature type="turn" evidence="46">
    <location>
        <begin position="724"/>
        <end position="727"/>
    </location>
</feature>
<feature type="strand" evidence="46">
    <location>
        <begin position="728"/>
        <end position="733"/>
    </location>
</feature>
<feature type="strand" evidence="46">
    <location>
        <begin position="740"/>
        <end position="743"/>
    </location>
</feature>
<feature type="strand" evidence="46">
    <location>
        <begin position="750"/>
        <end position="756"/>
    </location>
</feature>
<feature type="turn" evidence="46">
    <location>
        <begin position="757"/>
        <end position="760"/>
    </location>
</feature>
<feature type="strand" evidence="46">
    <location>
        <begin position="761"/>
        <end position="766"/>
    </location>
</feature>
<feature type="strand" evidence="46">
    <location>
        <begin position="768"/>
        <end position="770"/>
    </location>
</feature>
<feature type="strand" evidence="46">
    <location>
        <begin position="772"/>
        <end position="777"/>
    </location>
</feature>
<feature type="strand" evidence="46">
    <location>
        <begin position="784"/>
        <end position="787"/>
    </location>
</feature>
<feature type="strand" evidence="46">
    <location>
        <begin position="791"/>
        <end position="799"/>
    </location>
</feature>
<feature type="turn" evidence="46">
    <location>
        <begin position="800"/>
        <end position="803"/>
    </location>
</feature>
<feature type="strand" evidence="46">
    <location>
        <begin position="804"/>
        <end position="809"/>
    </location>
</feature>
<feature type="turn" evidence="46">
    <location>
        <begin position="810"/>
        <end position="813"/>
    </location>
</feature>
<feature type="strand" evidence="46">
    <location>
        <begin position="814"/>
        <end position="819"/>
    </location>
</feature>
<feature type="strand" evidence="46">
    <location>
        <begin position="826"/>
        <end position="830"/>
    </location>
</feature>
<feature type="strand" evidence="46">
    <location>
        <begin position="835"/>
        <end position="841"/>
    </location>
</feature>
<feature type="strand" evidence="46">
    <location>
        <begin position="844"/>
        <end position="849"/>
    </location>
</feature>
<feature type="turn" evidence="46">
    <location>
        <begin position="850"/>
        <end position="853"/>
    </location>
</feature>
<feature type="strand" evidence="46">
    <location>
        <begin position="854"/>
        <end position="859"/>
    </location>
</feature>
<feature type="turn" evidence="46">
    <location>
        <begin position="860"/>
        <end position="862"/>
    </location>
</feature>
<feature type="strand" evidence="46">
    <location>
        <begin position="867"/>
        <end position="870"/>
    </location>
</feature>
<feature type="strand" evidence="46">
    <location>
        <begin position="878"/>
        <end position="882"/>
    </location>
</feature>
<feature type="helix" evidence="46">
    <location>
        <begin position="884"/>
        <end position="886"/>
    </location>
</feature>
<feature type="turn" evidence="46">
    <location>
        <begin position="892"/>
        <end position="896"/>
    </location>
</feature>
<feature type="helix" evidence="46">
    <location>
        <begin position="897"/>
        <end position="899"/>
    </location>
</feature>
<feature type="strand" evidence="46">
    <location>
        <begin position="901"/>
        <end position="907"/>
    </location>
</feature>
<feature type="turn" evidence="46">
    <location>
        <begin position="908"/>
        <end position="910"/>
    </location>
</feature>
<feature type="strand" evidence="46">
    <location>
        <begin position="911"/>
        <end position="915"/>
    </location>
</feature>
<feature type="strand" evidence="46">
    <location>
        <begin position="933"/>
        <end position="940"/>
    </location>
</feature>
<feature type="strand" evidence="46">
    <location>
        <begin position="943"/>
        <end position="947"/>
    </location>
</feature>
<feature type="strand" evidence="46">
    <location>
        <begin position="967"/>
        <end position="973"/>
    </location>
</feature>
<feature type="turn" evidence="46">
    <location>
        <begin position="974"/>
        <end position="977"/>
    </location>
</feature>
<feature type="strand" evidence="46">
    <location>
        <begin position="978"/>
        <end position="983"/>
    </location>
</feature>
<feature type="turn" evidence="46">
    <location>
        <begin position="984"/>
        <end position="987"/>
    </location>
</feature>
<feature type="strand" evidence="46">
    <location>
        <begin position="988"/>
        <end position="993"/>
    </location>
</feature>
<feature type="strand" evidence="46">
    <location>
        <begin position="1000"/>
        <end position="1003"/>
    </location>
</feature>
<feature type="strand" evidence="46">
    <location>
        <begin position="1016"/>
        <end position="1022"/>
    </location>
</feature>
<feature type="turn" evidence="46">
    <location>
        <begin position="1023"/>
        <end position="1026"/>
    </location>
</feature>
<feature type="strand" evidence="46">
    <location>
        <begin position="1027"/>
        <end position="1032"/>
    </location>
</feature>
<feature type="turn" evidence="46">
    <location>
        <begin position="1033"/>
        <end position="1036"/>
    </location>
</feature>
<feature type="strand" evidence="46">
    <location>
        <begin position="1037"/>
        <end position="1042"/>
    </location>
</feature>
<feature type="strand" evidence="46">
    <location>
        <begin position="1047"/>
        <end position="1052"/>
    </location>
</feature>
<feature type="strand" evidence="46">
    <location>
        <begin position="1059"/>
        <end position="1065"/>
    </location>
</feature>
<feature type="turn" evidence="46">
    <location>
        <begin position="1066"/>
        <end position="1069"/>
    </location>
</feature>
<feature type="strand" evidence="46">
    <location>
        <begin position="1070"/>
        <end position="1077"/>
    </location>
</feature>
<feature type="strand" evidence="46">
    <location>
        <begin position="1080"/>
        <end position="1087"/>
    </location>
</feature>
<feature type="strand" evidence="46">
    <location>
        <begin position="1094"/>
        <end position="1097"/>
    </location>
</feature>
<feature type="strand" evidence="46">
    <location>
        <begin position="1104"/>
        <end position="1110"/>
    </location>
</feature>
<feature type="turn" evidence="46">
    <location>
        <begin position="1111"/>
        <end position="1114"/>
    </location>
</feature>
<feature type="strand" evidence="46">
    <location>
        <begin position="1115"/>
        <end position="1120"/>
    </location>
</feature>
<feature type="turn" evidence="46">
    <location>
        <begin position="1121"/>
        <end position="1124"/>
    </location>
</feature>
<feature type="strand" evidence="46">
    <location>
        <begin position="1125"/>
        <end position="1130"/>
    </location>
</feature>
<feature type="strand" evidence="46">
    <location>
        <begin position="1137"/>
        <end position="1140"/>
    </location>
</feature>
<feature type="strand" evidence="46">
    <location>
        <begin position="1147"/>
        <end position="1153"/>
    </location>
</feature>
<feature type="strand" evidence="46">
    <location>
        <begin position="1156"/>
        <end position="1161"/>
    </location>
</feature>
<feature type="turn" evidence="46">
    <location>
        <begin position="1162"/>
        <end position="1165"/>
    </location>
</feature>
<feature type="strand" evidence="46">
    <location>
        <begin position="1166"/>
        <end position="1171"/>
    </location>
</feature>
<feature type="strand" evidence="46">
    <location>
        <begin position="1174"/>
        <end position="1176"/>
    </location>
</feature>
<feature type="strand" evidence="46">
    <location>
        <begin position="1179"/>
        <end position="1182"/>
    </location>
</feature>
<feature type="strand" evidence="46">
    <location>
        <begin position="1188"/>
        <end position="1194"/>
    </location>
</feature>
<feature type="helix" evidence="46">
    <location>
        <begin position="1199"/>
        <end position="1204"/>
    </location>
</feature>
<feature type="turn" evidence="46">
    <location>
        <begin position="1206"/>
        <end position="1209"/>
    </location>
</feature>
<feature type="helix" evidence="46">
    <location>
        <begin position="1210"/>
        <end position="1213"/>
    </location>
</feature>
<feature type="strand" evidence="46">
    <location>
        <begin position="1215"/>
        <end position="1220"/>
    </location>
</feature>
<feature type="strand" evidence="48">
    <location>
        <begin position="1222"/>
        <end position="1224"/>
    </location>
</feature>
<feature type="strand" evidence="46">
    <location>
        <begin position="1226"/>
        <end position="1229"/>
    </location>
</feature>
<feature type="strand" evidence="46">
    <location>
        <begin position="1234"/>
        <end position="1236"/>
    </location>
</feature>
<feature type="strand" evidence="49">
    <location>
        <begin position="1240"/>
        <end position="1244"/>
    </location>
</feature>
<keyword id="KW-0002">3D-structure</keyword>
<keyword id="KW-1003">Cell membrane</keyword>
<keyword id="KW-0217">Developmental protein</keyword>
<keyword id="KW-0225">Disease variant</keyword>
<keyword id="KW-1015">Disulfide bond</keyword>
<keyword id="KW-0245">EGF-like domain</keyword>
<keyword id="KW-0254">Endocytosis</keyword>
<keyword id="KW-0256">Endoplasmic reticulum</keyword>
<keyword id="KW-0325">Glycoprotein</keyword>
<keyword id="KW-1017">Isopeptide bond</keyword>
<keyword id="KW-0449">Lipoprotein</keyword>
<keyword id="KW-0472">Membrane</keyword>
<keyword id="KW-0564">Palmitate</keyword>
<keyword id="KW-0597">Phosphoprotein</keyword>
<keyword id="KW-1267">Proteomics identification</keyword>
<keyword id="KW-0675">Receptor</keyword>
<keyword id="KW-1185">Reference proteome</keyword>
<keyword id="KW-0677">Repeat</keyword>
<keyword id="KW-0732">Signal</keyword>
<keyword id="KW-0812">Transmembrane</keyword>
<keyword id="KW-1133">Transmembrane helix</keyword>
<keyword id="KW-0832">Ubl conjugation</keyword>
<keyword id="KW-0879">Wnt signaling pathway</keyword>
<protein>
    <recommendedName>
        <fullName>Low-density lipoprotein receptor-related protein 6</fullName>
        <shortName>LRP-6</shortName>
    </recommendedName>
</protein>
<organism>
    <name type="scientific">Homo sapiens</name>
    <name type="common">Human</name>
    <dbReference type="NCBI Taxonomy" id="9606"/>
    <lineage>
        <taxon>Eukaryota</taxon>
        <taxon>Metazoa</taxon>
        <taxon>Chordata</taxon>
        <taxon>Craniata</taxon>
        <taxon>Vertebrata</taxon>
        <taxon>Euteleostomi</taxon>
        <taxon>Mammalia</taxon>
        <taxon>Eutheria</taxon>
        <taxon>Euarchontoglires</taxon>
        <taxon>Primates</taxon>
        <taxon>Haplorrhini</taxon>
        <taxon>Catarrhini</taxon>
        <taxon>Hominidae</taxon>
        <taxon>Homo</taxon>
    </lineage>
</organism>
<accession>O75581</accession>
<accession>Q17RZ2</accession>